<keyword id="KW-0002">3D-structure</keyword>
<keyword id="KW-0007">Acetylation</keyword>
<keyword id="KW-0223">Dioxygenase</keyword>
<keyword id="KW-0903">Direct protein sequencing</keyword>
<keyword id="KW-1015">Disulfide bond</keyword>
<keyword id="KW-0256">Endoplasmic reticulum</keyword>
<keyword id="KW-0275">Fatty acid biosynthesis</keyword>
<keyword id="KW-0276">Fatty acid metabolism</keyword>
<keyword id="KW-0325">Glycoprotein</keyword>
<keyword id="KW-0349">Heme</keyword>
<keyword id="KW-0408">Iron</keyword>
<keyword id="KW-0444">Lipid biosynthesis</keyword>
<keyword id="KW-0443">Lipid metabolism</keyword>
<keyword id="KW-0472">Membrane</keyword>
<keyword id="KW-0479">Metal-binding</keyword>
<keyword id="KW-0492">Microsome</keyword>
<keyword id="KW-0539">Nucleus</keyword>
<keyword id="KW-0560">Oxidoreductase</keyword>
<keyword id="KW-0575">Peroxidase</keyword>
<keyword id="KW-0643">Prostaglandin biosynthesis</keyword>
<keyword id="KW-0644">Prostaglandin metabolism</keyword>
<keyword id="KW-1185">Reference proteome</keyword>
<keyword id="KW-0702">S-nitrosylation</keyword>
<keyword id="KW-0732">Signal</keyword>
<feature type="signal peptide">
    <location>
        <begin position="1"/>
        <end position="17"/>
    </location>
</feature>
<feature type="chain" id="PRO_0000023876" description="Prostaglandin G/H synthase 2">
    <location>
        <begin position="18"/>
        <end position="604"/>
    </location>
</feature>
<feature type="domain" description="EGF-like" evidence="3">
    <location>
        <begin position="18"/>
        <end position="55"/>
    </location>
</feature>
<feature type="active site" description="Proton acceptor" evidence="4 9">
    <location>
        <position position="193"/>
    </location>
</feature>
<feature type="active site" description="For cyclooxygenase activity" evidence="9">
    <location>
        <position position="371"/>
    </location>
</feature>
<feature type="binding site" evidence="9 35">
    <location>
        <position position="106"/>
    </location>
    <ligand>
        <name>substrate</name>
    </ligand>
</feature>
<feature type="binding site" evidence="9 35">
    <location>
        <position position="341"/>
    </location>
    <ligand>
        <name>substrate</name>
    </ligand>
</feature>
<feature type="binding site" description="axial binding residue" evidence="7 9 10 12 17 29 31 36 37 39 41 42 45 51 53 54 55 58 66 72">
    <location>
        <position position="374"/>
    </location>
    <ligand>
        <name>heme b</name>
        <dbReference type="ChEBI" id="CHEBI:60344"/>
    </ligand>
    <ligandPart>
        <name>Fe</name>
        <dbReference type="ChEBI" id="CHEBI:18248"/>
    </ligandPart>
</feature>
<feature type="site" description="Aspirin-acetylated serine">
    <location>
        <position position="516"/>
    </location>
</feature>
<feature type="site" description="Not glycosylated" evidence="16">
    <location>
        <position position="592"/>
    </location>
</feature>
<feature type="modified residue" description="S-nitrosocysteine" evidence="1">
    <location>
        <position position="526"/>
    </location>
</feature>
<feature type="modified residue" description="O-acetylserine; by SPHK1" evidence="15">
    <location>
        <position position="565"/>
    </location>
</feature>
<feature type="glycosylation site" id="CAR_000222" description="N-linked (GlcNAc...) asparagine" evidence="5 7 9 10 11 12 16 17 28 29 30 31 32 33 34 35 36 37 38 39 40 41 45 47 48 50 51 52 54 55 56 57 58 59 60 61 62 63 64 65 66 67 68 69 70 72">
    <location>
        <position position="53"/>
    </location>
</feature>
<feature type="glycosylation site" id="CAR_000223" description="N-linked (GlcNAc...) asparagine" evidence="5 7 9 10 11 12 16 17 28 29 30 31 32 33 34 35 36 37 38 39 40 41 42 43 44 45 47 48 50 51 52 53 54 55 56 57 58 59 60 61 62 63 64 65 66 67 68 69 70 72">
    <location>
        <position position="130"/>
    </location>
</feature>
<feature type="glycosylation site" id="CAR_000224" description="N-linked (GlcNAc...) asparagine" evidence="5 7 9 10 11 12 16 17 28 29 30 31 32 33 34 35 36 37 38 39 40 41 42 43 44 45 47 48 50 51 52 54 55 56 57 58 59 60 61 62 63 64 65 66 67 68 69 70 72">
    <location>
        <position position="396"/>
    </location>
</feature>
<feature type="glycosylation site" id="CAR_000225" description="N-linked (GlcNAc...) asparagine" evidence="9 16">
    <location>
        <position position="580"/>
    </location>
</feature>
<feature type="disulfide bond" evidence="5 7 9 10 11 12 17 28 29 30 31 32 33 34 35 36 37 38 39 40 41 42 43 44 45 46 47 48 49 50 51 52 53 54 55 56 57 58 59 60 61 62 63 64 65 66 67 68 69 70 71 72">
    <location>
        <begin position="21"/>
        <end position="32"/>
    </location>
</feature>
<feature type="disulfide bond" evidence="5 7 9 10 11 12 17 28 29 30 31 32 33 34 35 36 37 38 39 40 41 42 43 44 45 46 47 48 49 50 51 52 53 54 55 56 57 58 59 60 61 62 63 64 65 66 67 68 69 70 71 72">
    <location>
        <begin position="22"/>
        <end position="145"/>
    </location>
</feature>
<feature type="disulfide bond" evidence="5 7 9 10 11 12 17 28 29 30 31 32 33 34 35 36 37 38 39 40 41 42 43 44 45 46 47 48 49 50 51 52 53 54 55 56 57 58 59 60 61 62 63 64 65 66 67 68 69 70 71 72">
    <location>
        <begin position="26"/>
        <end position="42"/>
    </location>
</feature>
<feature type="disulfide bond" evidence="5 7 9 10 11 12 17 28 29 30 31 32 33 34 35 36 37 38 39 40 41 42 43 44 45 46 47 48 49 50 51 52 53 54 55 56 57 58 59 60 61 62 63 64 65 66 67 68 69 70 71 72">
    <location>
        <begin position="44"/>
        <end position="54"/>
    </location>
</feature>
<feature type="disulfide bond" evidence="5 7 9 10 11 12 17 28 29 30 31 32 33 34 35 36 37 38 39 40 41 42 43 44 45 46 47 48 49 50 51 52 53 54 55 56 57 58 59 60 61 62 63 64 65 66 67 68 69 70 71 72">
    <location>
        <begin position="555"/>
        <end position="561"/>
    </location>
</feature>
<feature type="mutagenesis site" description="Impairs peroxidase and cyclooxygenase activities toward 2-arachidonoyl glycerol." evidence="14">
    <original>H</original>
    <variation>Y</variation>
    <location>
        <position position="374"/>
    </location>
</feature>
<feature type="mutagenesis site" description="Slightly reduced activity." evidence="9">
    <original>L</original>
    <variation>A</variation>
    <variation>F</variation>
    <variation>P</variation>
    <variation>T</variation>
    <location>
        <position position="517"/>
    </location>
</feature>
<feature type="mutagenesis site" description="Decreases acetylation by SPHK1." evidence="15">
    <original>S</original>
    <variation>A</variation>
    <location>
        <position position="565"/>
    </location>
</feature>
<feature type="mutagenesis site" description="Loss of glycosylation site." evidence="9">
    <original>N</original>
    <variation>A</variation>
    <location>
        <position position="580"/>
    </location>
</feature>
<feature type="sequence conflict" description="In Ref. 1; AAA39924." evidence="19" ref="1">
    <original>I</original>
    <variation>T</variation>
    <location>
        <position position="98"/>
    </location>
</feature>
<feature type="sequence conflict" description="In Ref. 3; AAA39918." evidence="19" ref="3">
    <original>A</original>
    <variation>R</variation>
    <location>
        <position position="142"/>
    </location>
</feature>
<feature type="sequence conflict" description="In Ref. 7; no nucleotide entry." evidence="19" ref="7">
    <original>I</original>
    <variation>L</variation>
    <location>
        <position position="301"/>
    </location>
</feature>
<feature type="sequence conflict" description="In Ref. 3; AAA39918." evidence="19" ref="3">
    <original>H</original>
    <variation>R</variation>
    <location>
        <position position="585"/>
    </location>
</feature>
<feature type="turn" evidence="74">
    <location>
        <begin position="20"/>
        <end position="23"/>
    </location>
</feature>
<feature type="helix" evidence="79">
    <location>
        <begin position="27"/>
        <end position="29"/>
    </location>
</feature>
<feature type="strand" evidence="74">
    <location>
        <begin position="31"/>
        <end position="36"/>
    </location>
</feature>
<feature type="strand" evidence="74">
    <location>
        <begin position="39"/>
        <end position="43"/>
    </location>
</feature>
<feature type="strand" evidence="74">
    <location>
        <begin position="47"/>
        <end position="50"/>
    </location>
</feature>
<feature type="turn" evidence="74">
    <location>
        <begin position="51"/>
        <end position="54"/>
    </location>
</feature>
<feature type="helix" evidence="74">
    <location>
        <begin position="59"/>
        <end position="67"/>
    </location>
</feature>
<feature type="helix" evidence="74">
    <location>
        <begin position="71"/>
        <end position="78"/>
    </location>
</feature>
<feature type="helix" evidence="74">
    <location>
        <begin position="82"/>
        <end position="89"/>
    </location>
</feature>
<feature type="helix" evidence="74">
    <location>
        <begin position="92"/>
        <end position="107"/>
    </location>
</feature>
<feature type="strand" evidence="78">
    <location>
        <begin position="108"/>
        <end position="110"/>
    </location>
</feature>
<feature type="strand" evidence="77">
    <location>
        <begin position="116"/>
        <end position="119"/>
    </location>
</feature>
<feature type="strand" evidence="74">
    <location>
        <begin position="120"/>
        <end position="122"/>
    </location>
</feature>
<feature type="helix" evidence="74">
    <location>
        <begin position="125"/>
        <end position="129"/>
    </location>
</feature>
<feature type="strand" evidence="73">
    <location>
        <begin position="131"/>
        <end position="133"/>
    </location>
</feature>
<feature type="strand" evidence="74">
    <location>
        <begin position="135"/>
        <end position="138"/>
    </location>
</feature>
<feature type="strand" evidence="80">
    <location>
        <begin position="145"/>
        <end position="147"/>
    </location>
</feature>
<feature type="strand" evidence="74">
    <location>
        <begin position="150"/>
        <end position="153"/>
    </location>
</feature>
<feature type="helix" evidence="74">
    <location>
        <begin position="160"/>
        <end position="167"/>
    </location>
</feature>
<feature type="helix" evidence="74">
    <location>
        <begin position="182"/>
        <end position="192"/>
    </location>
</feature>
<feature type="turn" evidence="74">
    <location>
        <begin position="193"/>
        <end position="195"/>
    </location>
</feature>
<feature type="turn" evidence="74">
    <location>
        <begin position="200"/>
        <end position="202"/>
    </location>
</feature>
<feature type="strand" evidence="74">
    <location>
        <begin position="206"/>
        <end position="208"/>
    </location>
</feature>
<feature type="strand" evidence="76">
    <location>
        <begin position="213"/>
        <end position="215"/>
    </location>
</feature>
<feature type="helix" evidence="74">
    <location>
        <begin position="217"/>
        <end position="220"/>
    </location>
</feature>
<feature type="helix" evidence="74">
    <location>
        <begin position="224"/>
        <end position="230"/>
    </location>
</feature>
<feature type="strand" evidence="74">
    <location>
        <begin position="241"/>
        <end position="243"/>
    </location>
</feature>
<feature type="strand" evidence="74">
    <location>
        <begin position="246"/>
        <end position="248"/>
    </location>
</feature>
<feature type="helix" evidence="74">
    <location>
        <begin position="252"/>
        <end position="255"/>
    </location>
</feature>
<feature type="strand" evidence="79">
    <location>
        <begin position="263"/>
        <end position="265"/>
    </location>
</feature>
<feature type="helix" evidence="74">
    <location>
        <begin position="267"/>
        <end position="269"/>
    </location>
</feature>
<feature type="turn" evidence="74">
    <location>
        <begin position="276"/>
        <end position="279"/>
    </location>
</feature>
<feature type="helix" evidence="74">
    <location>
        <begin position="282"/>
        <end position="305"/>
    </location>
</feature>
<feature type="helix" evidence="74">
    <location>
        <begin position="311"/>
        <end position="332"/>
    </location>
</feature>
<feature type="helix" evidence="74">
    <location>
        <begin position="334"/>
        <end position="339"/>
    </location>
</feature>
<feature type="helix" evidence="74">
    <location>
        <begin position="349"/>
        <end position="352"/>
    </location>
</feature>
<feature type="helix" evidence="74">
    <location>
        <begin position="365"/>
        <end position="370"/>
    </location>
</feature>
<feature type="helix" evidence="74">
    <location>
        <begin position="374"/>
        <end position="376"/>
    </location>
</feature>
<feature type="strand" evidence="74">
    <location>
        <begin position="379"/>
        <end position="383"/>
    </location>
</feature>
<feature type="strand" evidence="74">
    <location>
        <begin position="386"/>
        <end position="388"/>
    </location>
</feature>
<feature type="helix" evidence="74">
    <location>
        <begin position="390"/>
        <end position="393"/>
    </location>
</feature>
<feature type="helix" evidence="74">
    <location>
        <begin position="398"/>
        <end position="414"/>
    </location>
</feature>
<feature type="strand" evidence="74">
    <location>
        <begin position="420"/>
        <end position="424"/>
    </location>
</feature>
<feature type="helix" evidence="74">
    <location>
        <begin position="428"/>
        <end position="430"/>
    </location>
</feature>
<feature type="helix" evidence="74">
    <location>
        <begin position="431"/>
        <end position="443"/>
    </location>
</feature>
<feature type="helix" evidence="74">
    <location>
        <begin position="449"/>
        <end position="455"/>
    </location>
</feature>
<feature type="helix" evidence="74">
    <location>
        <begin position="464"/>
        <end position="468"/>
    </location>
</feature>
<feature type="strand" evidence="74">
    <location>
        <begin position="469"/>
        <end position="471"/>
    </location>
</feature>
<feature type="helix" evidence="74">
    <location>
        <begin position="472"/>
        <end position="481"/>
    </location>
</feature>
<feature type="helix" evidence="74">
    <location>
        <begin position="484"/>
        <end position="486"/>
    </location>
</feature>
<feature type="helix" evidence="74">
    <location>
        <begin position="489"/>
        <end position="495"/>
    </location>
</feature>
<feature type="strand" evidence="76">
    <location>
        <begin position="503"/>
        <end position="505"/>
    </location>
</feature>
<feature type="helix" evidence="74">
    <location>
        <begin position="506"/>
        <end position="521"/>
    </location>
</feature>
<feature type="helix" evidence="74">
    <location>
        <begin position="524"/>
        <end position="526"/>
    </location>
</feature>
<feature type="turn" evidence="74">
    <location>
        <begin position="528"/>
        <end position="530"/>
    </location>
</feature>
<feature type="helix" evidence="74">
    <location>
        <begin position="533"/>
        <end position="536"/>
    </location>
</feature>
<feature type="helix" evidence="74">
    <location>
        <begin position="539"/>
        <end position="546"/>
    </location>
</feature>
<feature type="helix" evidence="74">
    <location>
        <begin position="550"/>
        <end position="557"/>
    </location>
</feature>
<feature type="strand" evidence="75">
    <location>
        <begin position="558"/>
        <end position="560"/>
    </location>
</feature>
<comment type="function">
    <text evidence="1 2 7 9 10 12 14 15">Dual cyclooxygenase and peroxidase in the biosynthesis pathway of prostanoids, a class of C20 oxylipins mainly derived from arachidonate, with a particular role in the inflammatory response (PubMed:12925531, PubMed:20463020, PubMed:20810665, PubMed:21489986, PubMed:22942274). The cyclooxygenase activity oxygenates arachidonate (AA, C20:4(n-6)) to the hydroperoxy endoperoxide prostaglandin G2 (PGG2), and the peroxidase activity reduces PGG2 to the hydroxy endoperoxide PGH2, the precursor of all 2-series prostaglandins and thromboxanes. This complex transformation is initiated by abstraction of hydrogen at carbon 13 (with S-stereochemistry), followed by insertion of molecular O2 to form the endoperoxide bridge between carbon 9 and 11 that defines prostaglandins. The insertion of a second molecule of O2 (bis-oxygenase activity) yields a hydroperoxy group in PGG2 that is then reduced to PGH2 by two electrons (PubMed:12925531, PubMed:20463020, PubMed:20810665, PubMed:21489986, PubMed:22942274). Similarly catalyzes successive cyclooxygenation and peroxidation of dihomo-gamma-linoleate (DGLA, C20:3(n-6)) and eicosapentaenoate (EPA, C20:5(n-3)) to corresponding PGH1 and PGH3, the precursors of 1- and 3-series prostaglandins (By similarity). In an alternative pathway of prostanoid biosynthesis, converts 2-arachidonoyl lysophopholipids to prostanoid lysophopholipids, which are then hydrolyzed by intracellular phospholipases to release free prostanoids (By similarity). Metabolizes 2-arachidonoyl glycerol yielding the glyceryl ester of PGH2, a process that can contribute to pain response (By similarity). Generates lipid mediators from n-3 and n-6 polyunsaturated fatty acids (PUFAs) via a lipoxygenase-type mechanism. Oxygenates PUFAs to hydroperoxy compounds and then reduces them to corresponding alcohols (By similarity). Plays a role in the generation of resolution phase interaction products (resolvins) during both sterile and infectious inflammation. Metabolizes docosahexaenoate (DHA, C22:6(n-3)) to 17R-HDHA, a precursor of the D-series resolvins (RvDs). As a component of the biosynthetic pathway of E-series resolvins (RvEs), converts eicosapentaenoate (EPA, C20:5(n-3)) primarily to 18S-HEPE that is further metabolized by ALOX5 and LTA4H to generate 18S-RvE1 and 18S-RvE2. In vascular endothelial cells, converts docosapentaenoate (DPA, C22:5(n-3)) to 13R-HDPA, a precursor for 13-series resolvins (RvTs) shown to activate macrophage phagocytosis during bacterial infection (By similarity). In activated leukocytes, contributes to oxygenation of hydroxyeicosatetraenoates (HETE) to diHETES (5,15-diHETE and 5,11-diHETE) (By similarity). Can also use linoleate (LA, (9Z,12Z)-octadecadienoate, C18:2(n-6)) as substrate and produce hydroxyoctadecadienoates (HODEs) in a regio- and stereospecific manner, being (9R)-HODE ((9R)-hydroxy-(10E,12Z)-octadecadienoate) and (13S)-HODE ((13S)-hydroxy-(9Z,11E)-octadecadienoate) its major products (By similarity). During neuroinflammation, plays a role in neuronal secretion of specialized preresolving mediators (SPMs) 15R-lipoxin A4 that regulates phagocytic microglia (PubMed:29662056).</text>
</comment>
<comment type="catalytic activity">
    <reaction evidence="7 9 10 12 14">
        <text>(5Z,8Z,11Z,14Z)-eicosatetraenoate + AH2 + 2 O2 = prostaglandin H2 + A + H2O</text>
        <dbReference type="Rhea" id="RHEA:23728"/>
        <dbReference type="ChEBI" id="CHEBI:13193"/>
        <dbReference type="ChEBI" id="CHEBI:15377"/>
        <dbReference type="ChEBI" id="CHEBI:15379"/>
        <dbReference type="ChEBI" id="CHEBI:17499"/>
        <dbReference type="ChEBI" id="CHEBI:32395"/>
        <dbReference type="ChEBI" id="CHEBI:57405"/>
        <dbReference type="EC" id="1.14.99.1"/>
    </reaction>
    <physiologicalReaction direction="left-to-right" evidence="21 22 23 24 25">
        <dbReference type="Rhea" id="RHEA:23729"/>
    </physiologicalReaction>
</comment>
<comment type="catalytic activity">
    <reaction evidence="6 14">
        <text>(5Z,8Z,11Z,14Z)-eicosatetraenoate + 2 O2 = prostaglandin G2</text>
        <dbReference type="Rhea" id="RHEA:42596"/>
        <dbReference type="ChEBI" id="CHEBI:15379"/>
        <dbReference type="ChEBI" id="CHEBI:32395"/>
        <dbReference type="ChEBI" id="CHEBI:82629"/>
    </reaction>
    <physiologicalReaction direction="left-to-right" evidence="20 25">
        <dbReference type="Rhea" id="RHEA:42597"/>
    </physiologicalReaction>
</comment>
<comment type="catalytic activity">
    <reaction evidence="6 14">
        <text>prostaglandin G2 + AH2 = prostaglandin H2 + A + H2O</text>
        <dbReference type="Rhea" id="RHEA:42600"/>
        <dbReference type="ChEBI" id="CHEBI:13193"/>
        <dbReference type="ChEBI" id="CHEBI:15377"/>
        <dbReference type="ChEBI" id="CHEBI:17499"/>
        <dbReference type="ChEBI" id="CHEBI:57405"/>
        <dbReference type="ChEBI" id="CHEBI:82629"/>
    </reaction>
    <physiologicalReaction direction="left-to-right" evidence="20 25">
        <dbReference type="Rhea" id="RHEA:42601"/>
    </physiologicalReaction>
</comment>
<comment type="catalytic activity">
    <reaction evidence="1">
        <text>(5Z,8Z,11Z,14Z,17Z)-eicosapentaenoate + 2 O2 = prostaglandin G3</text>
        <dbReference type="Rhea" id="RHEA:50444"/>
        <dbReference type="ChEBI" id="CHEBI:15379"/>
        <dbReference type="ChEBI" id="CHEBI:58562"/>
        <dbReference type="ChEBI" id="CHEBI:133133"/>
    </reaction>
    <physiologicalReaction direction="left-to-right" evidence="1">
        <dbReference type="Rhea" id="RHEA:50445"/>
    </physiologicalReaction>
</comment>
<comment type="catalytic activity">
    <reaction evidence="1">
        <text>prostaglandin G3 + AH2 = prostaglandin H3 + A + H2O</text>
        <dbReference type="Rhea" id="RHEA:50448"/>
        <dbReference type="ChEBI" id="CHEBI:13193"/>
        <dbReference type="ChEBI" id="CHEBI:15377"/>
        <dbReference type="ChEBI" id="CHEBI:17499"/>
        <dbReference type="ChEBI" id="CHEBI:133133"/>
        <dbReference type="ChEBI" id="CHEBI:133134"/>
    </reaction>
    <physiologicalReaction direction="left-to-right" evidence="1">
        <dbReference type="Rhea" id="RHEA:50449"/>
    </physiologicalReaction>
</comment>
<comment type="catalytic activity">
    <reaction evidence="1">
        <text>(8Z,11Z,14Z)-eicosatrienoate + 2 O2 = prostaglandin G1</text>
        <dbReference type="Rhea" id="RHEA:50424"/>
        <dbReference type="ChEBI" id="CHEBI:15379"/>
        <dbReference type="ChEBI" id="CHEBI:71589"/>
        <dbReference type="ChEBI" id="CHEBI:133084"/>
    </reaction>
    <physiologicalReaction direction="left-to-right" evidence="1">
        <dbReference type="Rhea" id="RHEA:50425"/>
    </physiologicalReaction>
</comment>
<comment type="catalytic activity">
    <reaction evidence="1">
        <text>prostaglandin G1 + AH2 = prostaglandin H1 + A + H2O</text>
        <dbReference type="Rhea" id="RHEA:50432"/>
        <dbReference type="ChEBI" id="CHEBI:13193"/>
        <dbReference type="ChEBI" id="CHEBI:15377"/>
        <dbReference type="ChEBI" id="CHEBI:17499"/>
        <dbReference type="ChEBI" id="CHEBI:90793"/>
        <dbReference type="ChEBI" id="CHEBI:133084"/>
    </reaction>
    <physiologicalReaction direction="left-to-right" evidence="1">
        <dbReference type="Rhea" id="RHEA:50433"/>
    </physiologicalReaction>
</comment>
<comment type="catalytic activity">
    <reaction evidence="1">
        <text>2-(5Z,8Z,11Z,14Z)-eicosatetraenoyl-sn-glycero-3-phosphoethanolamine + 2 O2 = 2-(prostaglandin G2)-sn-glycero-3-phosphoethanolamine</text>
        <dbReference type="Rhea" id="RHEA:54204"/>
        <dbReference type="ChEBI" id="CHEBI:15379"/>
        <dbReference type="ChEBI" id="CHEBI:76091"/>
        <dbReference type="ChEBI" id="CHEBI:138098"/>
    </reaction>
    <physiologicalReaction direction="left-to-right" evidence="1">
        <dbReference type="Rhea" id="RHEA:54205"/>
    </physiologicalReaction>
</comment>
<comment type="catalytic activity">
    <reaction evidence="1">
        <text>2-(prostaglandin G2)-sn-glycero-3-phosphoethanolamine + AH2 = 2-(prostaglandin H2)-sn-glycero-3-phosphoethanolamine + A + H2O</text>
        <dbReference type="Rhea" id="RHEA:54208"/>
        <dbReference type="ChEBI" id="CHEBI:13193"/>
        <dbReference type="ChEBI" id="CHEBI:15377"/>
        <dbReference type="ChEBI" id="CHEBI:17499"/>
        <dbReference type="ChEBI" id="CHEBI:138098"/>
        <dbReference type="ChEBI" id="CHEBI:138099"/>
    </reaction>
    <physiologicalReaction direction="left-to-right" evidence="1">
        <dbReference type="Rhea" id="RHEA:54209"/>
    </physiologicalReaction>
</comment>
<comment type="catalytic activity">
    <reaction evidence="1">
        <text>2-(5Z,8Z,11Z,14Z)-eicosatetraenoyl-sn-glycero-3-phosphocholine + 2 O2 = 2-(prostaglandin G2)-sn-glycero-3-phosphocholine</text>
        <dbReference type="Rhea" id="RHEA:54212"/>
        <dbReference type="ChEBI" id="CHEBI:15379"/>
        <dbReference type="ChEBI" id="CHEBI:76079"/>
        <dbReference type="ChEBI" id="CHEBI:138100"/>
    </reaction>
    <physiologicalReaction direction="left-to-right" evidence="1">
        <dbReference type="Rhea" id="RHEA:54213"/>
    </physiologicalReaction>
</comment>
<comment type="catalytic activity">
    <reaction evidence="1">
        <text>2-(prostaglandin G2)-sn-glycero-3-phosphocholine + AH2 = 2-(prostaglandin H2)-sn-glycero-3-phosphocholine + A + H2O</text>
        <dbReference type="Rhea" id="RHEA:54216"/>
        <dbReference type="ChEBI" id="CHEBI:13193"/>
        <dbReference type="ChEBI" id="CHEBI:15377"/>
        <dbReference type="ChEBI" id="CHEBI:17499"/>
        <dbReference type="ChEBI" id="CHEBI:138100"/>
        <dbReference type="ChEBI" id="CHEBI:138101"/>
    </reaction>
    <physiologicalReaction direction="left-to-right" evidence="1">
        <dbReference type="Rhea" id="RHEA:54217"/>
    </physiologicalReaction>
</comment>
<comment type="catalytic activity">
    <reaction evidence="1">
        <text>(15S)-hydroperoxy-(5Z,8Z,11Z,13E)-eicosatetraenoate + AH2 = (15S)-hydroxy-(5Z,8Z,11Z,13E)-eicosatetraenoate + A + H2O</text>
        <dbReference type="Rhea" id="RHEA:48856"/>
        <dbReference type="ChEBI" id="CHEBI:13193"/>
        <dbReference type="ChEBI" id="CHEBI:15377"/>
        <dbReference type="ChEBI" id="CHEBI:17499"/>
        <dbReference type="ChEBI" id="CHEBI:57409"/>
        <dbReference type="ChEBI" id="CHEBI:57446"/>
    </reaction>
    <physiologicalReaction direction="left-to-right" evidence="1">
        <dbReference type="Rhea" id="RHEA:48857"/>
    </physiologicalReaction>
</comment>
<comment type="catalytic activity">
    <reaction evidence="1">
        <text>2-(5Z,8Z,11Z,14Z)-eicosatetraenoyl-sn-glycero-3-phosphocholine + AH2 + O2 = 2-[(15S)-hydroxy-(5Z,8Z,11Z,13E)-eicosatetraenoyl]-sn-glycero-3-phosphocholine + A + H2O</text>
        <dbReference type="Rhea" id="RHEA:53684"/>
        <dbReference type="ChEBI" id="CHEBI:13193"/>
        <dbReference type="ChEBI" id="CHEBI:15377"/>
        <dbReference type="ChEBI" id="CHEBI:15379"/>
        <dbReference type="ChEBI" id="CHEBI:17499"/>
        <dbReference type="ChEBI" id="CHEBI:76079"/>
        <dbReference type="ChEBI" id="CHEBI:137584"/>
    </reaction>
    <physiologicalReaction direction="left-to-right" evidence="1">
        <dbReference type="Rhea" id="RHEA:53685"/>
    </physiologicalReaction>
</comment>
<comment type="catalytic activity">
    <reaction evidence="1">
        <text>2-(5Z,8Z,11Z,14Z)-eicosatetraenoyl-sn-glycero-3-phosphocholine + AH2 + O2 = 2-[(15R)-hydroxy-(5Z,8Z,11Z,13E)-eicosatetraenoyl]-sn-glycero-3-phosphocholine + A + H2O</text>
        <dbReference type="Rhea" id="RHEA:53680"/>
        <dbReference type="ChEBI" id="CHEBI:13193"/>
        <dbReference type="ChEBI" id="CHEBI:15377"/>
        <dbReference type="ChEBI" id="CHEBI:15379"/>
        <dbReference type="ChEBI" id="CHEBI:17499"/>
        <dbReference type="ChEBI" id="CHEBI:76079"/>
        <dbReference type="ChEBI" id="CHEBI:137583"/>
    </reaction>
    <physiologicalReaction direction="left-to-right" evidence="1">
        <dbReference type="Rhea" id="RHEA:53681"/>
    </physiologicalReaction>
</comment>
<comment type="catalytic activity">
    <reaction evidence="1">
        <text>2-(5Z,8Z,11Z,14Z)-eicosatetraenoyl-sn-glycero-3-phosphocholine + AH2 + O2 = 2-[(11R)-hydroxy-(5Z,8Z,12E,14Z)-eicosatetraenoyl]-sn-glycero-3-phosphocholine + A + H2O</text>
        <dbReference type="Rhea" id="RHEA:53676"/>
        <dbReference type="ChEBI" id="CHEBI:13193"/>
        <dbReference type="ChEBI" id="CHEBI:15377"/>
        <dbReference type="ChEBI" id="CHEBI:15379"/>
        <dbReference type="ChEBI" id="CHEBI:17499"/>
        <dbReference type="ChEBI" id="CHEBI:76079"/>
        <dbReference type="ChEBI" id="CHEBI:137582"/>
    </reaction>
    <physiologicalReaction direction="left-to-right" evidence="1">
        <dbReference type="Rhea" id="RHEA:53677"/>
    </physiologicalReaction>
</comment>
<comment type="catalytic activity">
    <reaction evidence="1">
        <text>(9Z,12Z)-octadecadienoate + AH2 + O2 = 9-hydroxy-(10E,12Z)-octadecadienoate + A + H2O</text>
        <dbReference type="Rhea" id="RHEA:50864"/>
        <dbReference type="ChEBI" id="CHEBI:13193"/>
        <dbReference type="ChEBI" id="CHEBI:15377"/>
        <dbReference type="ChEBI" id="CHEBI:15379"/>
        <dbReference type="ChEBI" id="CHEBI:17499"/>
        <dbReference type="ChEBI" id="CHEBI:30245"/>
        <dbReference type="ChEBI" id="CHEBI:133820"/>
    </reaction>
    <physiologicalReaction direction="left-to-right" evidence="1">
        <dbReference type="Rhea" id="RHEA:50865"/>
    </physiologicalReaction>
</comment>
<comment type="catalytic activity">
    <reaction evidence="1">
        <text>(9Z,12Z)-octadecadienoate + AH2 + O2 = 13-hydroxy-(9Z,11E)-octadecadienoate + A + H2O</text>
        <dbReference type="Rhea" id="RHEA:50860"/>
        <dbReference type="ChEBI" id="CHEBI:13193"/>
        <dbReference type="ChEBI" id="CHEBI:15377"/>
        <dbReference type="ChEBI" id="CHEBI:15379"/>
        <dbReference type="ChEBI" id="CHEBI:17499"/>
        <dbReference type="ChEBI" id="CHEBI:30245"/>
        <dbReference type="ChEBI" id="CHEBI:133819"/>
    </reaction>
    <physiologicalReaction direction="left-to-right" evidence="1">
        <dbReference type="Rhea" id="RHEA:50861"/>
    </physiologicalReaction>
</comment>
<comment type="catalytic activity">
    <reaction evidence="1">
        <text>(5Z,8Z,11Z,14Z)-eicosatetraenoate + AH2 + O2 = (15R)-hydroxy-(5Z,8Z,11Z,13E)-eicosatetraenoate + A + H2O</text>
        <dbReference type="Rhea" id="RHEA:50856"/>
        <dbReference type="ChEBI" id="CHEBI:13193"/>
        <dbReference type="ChEBI" id="CHEBI:15377"/>
        <dbReference type="ChEBI" id="CHEBI:15379"/>
        <dbReference type="ChEBI" id="CHEBI:17499"/>
        <dbReference type="ChEBI" id="CHEBI:32395"/>
        <dbReference type="ChEBI" id="CHEBI:78837"/>
    </reaction>
    <physiologicalReaction direction="left-to-right" evidence="1">
        <dbReference type="Rhea" id="RHEA:50857"/>
    </physiologicalReaction>
</comment>
<comment type="catalytic activity">
    <reaction evidence="1">
        <text>(5Z,8Z,11Z,14Z)-eicosatetraenoate + AH2 + O2 = (11R)-hydroxy-(5Z,8Z,12E,14Z)-eicosatetraenoate + A + H2O</text>
        <dbReference type="Rhea" id="RHEA:50852"/>
        <dbReference type="ChEBI" id="CHEBI:13193"/>
        <dbReference type="ChEBI" id="CHEBI:15377"/>
        <dbReference type="ChEBI" id="CHEBI:15379"/>
        <dbReference type="ChEBI" id="CHEBI:17499"/>
        <dbReference type="ChEBI" id="CHEBI:32395"/>
        <dbReference type="ChEBI" id="CHEBI:78836"/>
    </reaction>
    <physiologicalReaction direction="left-to-right" evidence="1">
        <dbReference type="Rhea" id="RHEA:50853"/>
    </physiologicalReaction>
</comment>
<comment type="catalytic activity">
    <reaction evidence="1">
        <text>(5Z,8Z,11Z,14Z,17Z)-eicosapentaenoate + AH2 + O2 = (11R)-hydroxy-(5Z,8Z,12E,14Z,17Z)-eicosapentaenoate + A + H2O</text>
        <dbReference type="Rhea" id="RHEA:50848"/>
        <dbReference type="ChEBI" id="CHEBI:13193"/>
        <dbReference type="ChEBI" id="CHEBI:15377"/>
        <dbReference type="ChEBI" id="CHEBI:15379"/>
        <dbReference type="ChEBI" id="CHEBI:17499"/>
        <dbReference type="ChEBI" id="CHEBI:58562"/>
        <dbReference type="ChEBI" id="CHEBI:90820"/>
    </reaction>
    <physiologicalReaction direction="left-to-right" evidence="1">
        <dbReference type="Rhea" id="RHEA:50849"/>
    </physiologicalReaction>
</comment>
<comment type="catalytic activity">
    <reaction evidence="1">
        <text>(5Z,8Z,11Z,14Z,17Z)-eicosapentaenoate + AH2 + O2 = (18S)-hydroxy-(5Z,8Z,11Z,14Z,16E)-eicosapentaenoate + A + H2O</text>
        <dbReference type="Rhea" id="RHEA:50200"/>
        <dbReference type="ChEBI" id="CHEBI:13193"/>
        <dbReference type="ChEBI" id="CHEBI:15377"/>
        <dbReference type="ChEBI" id="CHEBI:15379"/>
        <dbReference type="ChEBI" id="CHEBI:17499"/>
        <dbReference type="ChEBI" id="CHEBI:58562"/>
        <dbReference type="ChEBI" id="CHEBI:132083"/>
    </reaction>
    <physiologicalReaction direction="left-to-right" evidence="1">
        <dbReference type="Rhea" id="RHEA:50201"/>
    </physiologicalReaction>
</comment>
<comment type="catalytic activity">
    <reaction evidence="1">
        <text>(5Z,8Z,11Z,14Z,17Z)-eicosapentaenoate + AH2 + O2 = (18R)-hydroxy-(5Z,8Z,11Z,14Z,16E)-eicosapentaenoate + A + H2O</text>
        <dbReference type="Rhea" id="RHEA:48836"/>
        <dbReference type="ChEBI" id="CHEBI:13193"/>
        <dbReference type="ChEBI" id="CHEBI:15377"/>
        <dbReference type="ChEBI" id="CHEBI:15379"/>
        <dbReference type="ChEBI" id="CHEBI:17499"/>
        <dbReference type="ChEBI" id="CHEBI:58562"/>
        <dbReference type="ChEBI" id="CHEBI:90818"/>
    </reaction>
    <physiologicalReaction direction="left-to-right" evidence="1">
        <dbReference type="Rhea" id="RHEA:48837"/>
    </physiologicalReaction>
</comment>
<comment type="catalytic activity">
    <reaction evidence="1">
        <text>(5Z,8Z,11Z,14Z,17Z)-eicosapentaenoate + AH2 + O2 = (15R)-hydroxy-(5Z,8Z,11Z,13E,17Z)-eicosapentaenoate + A + H2O</text>
        <dbReference type="Rhea" id="RHEA:48840"/>
        <dbReference type="ChEBI" id="CHEBI:13193"/>
        <dbReference type="ChEBI" id="CHEBI:15377"/>
        <dbReference type="ChEBI" id="CHEBI:15379"/>
        <dbReference type="ChEBI" id="CHEBI:17499"/>
        <dbReference type="ChEBI" id="CHEBI:58562"/>
        <dbReference type="ChEBI" id="CHEBI:90819"/>
    </reaction>
    <physiologicalReaction direction="left-to-right" evidence="1">
        <dbReference type="Rhea" id="RHEA:48841"/>
    </physiologicalReaction>
</comment>
<comment type="catalytic activity">
    <reaction evidence="1">
        <text>(5Z,8Z,11Z,14Z,17Z)-eicosapentaenoate + AH2 + O2 = (15S)-hydroxy-(5Z,8Z,11Z,13E,17Z)-eicosapentaenoate + A + H2O</text>
        <dbReference type="Rhea" id="RHEA:50196"/>
        <dbReference type="ChEBI" id="CHEBI:13193"/>
        <dbReference type="ChEBI" id="CHEBI:15377"/>
        <dbReference type="ChEBI" id="CHEBI:15379"/>
        <dbReference type="ChEBI" id="CHEBI:17499"/>
        <dbReference type="ChEBI" id="CHEBI:58562"/>
        <dbReference type="ChEBI" id="CHEBI:132087"/>
    </reaction>
    <physiologicalReaction direction="left-to-right" evidence="1">
        <dbReference type="Rhea" id="RHEA:50197"/>
    </physiologicalReaction>
</comment>
<comment type="catalytic activity">
    <reaction evidence="1">
        <text>(7Z,10Z,13Z,16Z,19Z)-docosapentaenoate + AH2 + O2 = 13R-hydroxy-(7Z,10Z,14E,16Z,19Z)-docosapentaenoate + A + H2O</text>
        <dbReference type="Rhea" id="RHEA:48852"/>
        <dbReference type="ChEBI" id="CHEBI:13193"/>
        <dbReference type="ChEBI" id="CHEBI:15377"/>
        <dbReference type="ChEBI" id="CHEBI:15379"/>
        <dbReference type="ChEBI" id="CHEBI:17499"/>
        <dbReference type="ChEBI" id="CHEBI:77224"/>
        <dbReference type="ChEBI" id="CHEBI:90824"/>
    </reaction>
    <physiologicalReaction direction="left-to-right" evidence="1">
        <dbReference type="Rhea" id="RHEA:48853"/>
    </physiologicalReaction>
</comment>
<comment type="catalytic activity">
    <reaction evidence="1">
        <text>(4Z,7Z,10Z,13Z,16Z,19Z)-docosahexaenoate + AH2 + O2 = 13-hydroxy-(4Z,7Z,10Z,14E,16Z,19Z)-docosahexaenoate + A + H2O</text>
        <dbReference type="Rhea" id="RHEA:48820"/>
        <dbReference type="ChEBI" id="CHEBI:13193"/>
        <dbReference type="ChEBI" id="CHEBI:15377"/>
        <dbReference type="ChEBI" id="CHEBI:15379"/>
        <dbReference type="ChEBI" id="CHEBI:17499"/>
        <dbReference type="ChEBI" id="CHEBI:77016"/>
        <dbReference type="ChEBI" id="CHEBI:90815"/>
    </reaction>
    <physiologicalReaction direction="left-to-right" evidence="1">
        <dbReference type="Rhea" id="RHEA:48821"/>
    </physiologicalReaction>
</comment>
<comment type="catalytic activity">
    <reaction evidence="1">
        <text>(5S)-hydroxy-(6E,8Z,11Z,14Z)-eicosatetraenoate + AH2 + O2 = (5S,15R)-dihydroxy-(6E,8Z,11Z,13E)-eicosatetraenoate + A + H2O</text>
        <dbReference type="Rhea" id="RHEA:48812"/>
        <dbReference type="ChEBI" id="CHEBI:13193"/>
        <dbReference type="ChEBI" id="CHEBI:15377"/>
        <dbReference type="ChEBI" id="CHEBI:15379"/>
        <dbReference type="ChEBI" id="CHEBI:17499"/>
        <dbReference type="ChEBI" id="CHEBI:90632"/>
        <dbReference type="ChEBI" id="CHEBI:90812"/>
    </reaction>
    <physiologicalReaction direction="left-to-right" evidence="1">
        <dbReference type="Rhea" id="RHEA:48813"/>
    </physiologicalReaction>
</comment>
<comment type="catalytic activity">
    <reaction evidence="1">
        <text>(4Z,7Z,10Z,13Z,16Z,19Z)-docosahexaenoate + AH2 + O2 = 17R-hydroxy-(4Z,7Z,10Z,13Z,15E,19Z)-docosahexaenoate + A + H2O</text>
        <dbReference type="Rhea" id="RHEA:48816"/>
        <dbReference type="ChEBI" id="CHEBI:13193"/>
        <dbReference type="ChEBI" id="CHEBI:15377"/>
        <dbReference type="ChEBI" id="CHEBI:15379"/>
        <dbReference type="ChEBI" id="CHEBI:17499"/>
        <dbReference type="ChEBI" id="CHEBI:77016"/>
        <dbReference type="ChEBI" id="CHEBI:90814"/>
    </reaction>
    <physiologicalReaction direction="left-to-right" evidence="1">
        <dbReference type="Rhea" id="RHEA:48817"/>
    </physiologicalReaction>
</comment>
<comment type="catalytic activity">
    <reaction evidence="1">
        <text>(5S)-hydroxy-(6E,8Z,11Z,14Z)-eicosatetraenoate + AH2 + O2 = (5S,15S)-dihydroxy-(6E,8Z,11Z,13E)-eicosatetraenoate + A + H2O</text>
        <dbReference type="Rhea" id="RHEA:48808"/>
        <dbReference type="ChEBI" id="CHEBI:13193"/>
        <dbReference type="ChEBI" id="CHEBI:15377"/>
        <dbReference type="ChEBI" id="CHEBI:15379"/>
        <dbReference type="ChEBI" id="CHEBI:17499"/>
        <dbReference type="ChEBI" id="CHEBI:90632"/>
        <dbReference type="ChEBI" id="CHEBI:90813"/>
    </reaction>
    <physiologicalReaction direction="left-to-right" evidence="1">
        <dbReference type="Rhea" id="RHEA:48809"/>
    </physiologicalReaction>
</comment>
<comment type="catalytic activity">
    <reaction evidence="1">
        <text>(5S)-hydroxy-(6E,8Z,11Z,14Z)-eicosatetraenoate + AH2 + O2 = (5S,11R)-dihydroxy-(6E,8Z,12E,14Z)-eicosatetraenoate + A + H2O</text>
        <dbReference type="Rhea" id="RHEA:48804"/>
        <dbReference type="ChEBI" id="CHEBI:13193"/>
        <dbReference type="ChEBI" id="CHEBI:15377"/>
        <dbReference type="ChEBI" id="CHEBI:15379"/>
        <dbReference type="ChEBI" id="CHEBI:17499"/>
        <dbReference type="ChEBI" id="CHEBI:90632"/>
        <dbReference type="ChEBI" id="CHEBI:90810"/>
    </reaction>
    <physiologicalReaction direction="left-to-right" evidence="1">
        <dbReference type="Rhea" id="RHEA:48805"/>
    </physiologicalReaction>
</comment>
<comment type="catalytic activity">
    <reaction evidence="6 14">
        <text>2-(5Z,8Z,11Z,14Z-eicosatetraenoyl)-glycerol + 2 O2 = 2-glyceryl-prostaglandin G2</text>
        <dbReference type="Rhea" id="RHEA:45288"/>
        <dbReference type="ChEBI" id="CHEBI:15379"/>
        <dbReference type="ChEBI" id="CHEBI:52392"/>
        <dbReference type="ChEBI" id="CHEBI:85165"/>
    </reaction>
    <physiologicalReaction direction="left-to-right" evidence="20 25">
        <dbReference type="Rhea" id="RHEA:45289"/>
    </physiologicalReaction>
</comment>
<comment type="catalytic activity">
    <reaction evidence="6 14">
        <text>2-glyceryl-prostaglandin G2 + AH2 = 2-glyceryl-prostaglandin H2 + A + H2O</text>
        <dbReference type="Rhea" id="RHEA:45292"/>
        <dbReference type="ChEBI" id="CHEBI:13193"/>
        <dbReference type="ChEBI" id="CHEBI:15377"/>
        <dbReference type="ChEBI" id="CHEBI:17499"/>
        <dbReference type="ChEBI" id="CHEBI:85165"/>
        <dbReference type="ChEBI" id="CHEBI:85166"/>
    </reaction>
    <physiologicalReaction direction="left-to-right" evidence="20 25">
        <dbReference type="Rhea" id="RHEA:45293"/>
    </physiologicalReaction>
</comment>
<comment type="catalytic activity">
    <reaction evidence="1">
        <text>(5Z,8Z,11Z,14Z)-eicosatetraenoate + O2 = (15R)-hydroperoxy-(5Z,8Z,11Z,13E)-eicosatetraenoate</text>
        <dbReference type="Rhea" id="RHEA:42284"/>
        <dbReference type="ChEBI" id="CHEBI:15379"/>
        <dbReference type="ChEBI" id="CHEBI:32395"/>
        <dbReference type="ChEBI" id="CHEBI:82626"/>
    </reaction>
    <physiologicalReaction direction="left-to-right" evidence="1">
        <dbReference type="Rhea" id="RHEA:42285"/>
    </physiologicalReaction>
</comment>
<comment type="catalytic activity">
    <reaction evidence="1">
        <text>(5Z,8Z,11Z,14Z)-eicosatetraenoate + O2 = 11R-hydroperoxy-(5Z,8Z,12E,14Z)-eicosatetraenoate</text>
        <dbReference type="Rhea" id="RHEA:42280"/>
        <dbReference type="ChEBI" id="CHEBI:15379"/>
        <dbReference type="ChEBI" id="CHEBI:32395"/>
        <dbReference type="ChEBI" id="CHEBI:82628"/>
    </reaction>
    <physiologicalReaction direction="left-to-right" evidence="1">
        <dbReference type="Rhea" id="RHEA:42281"/>
    </physiologicalReaction>
</comment>
<comment type="catalytic activity">
    <reaction evidence="2">
        <text>(9Z,12Z)-octadecadienoate + AH2 + O2 = (9R)-hydroxy-(10E,12Z)-octadecadienoate + A + H2O</text>
        <dbReference type="Rhea" id="RHEA:75447"/>
        <dbReference type="ChEBI" id="CHEBI:13193"/>
        <dbReference type="ChEBI" id="CHEBI:15377"/>
        <dbReference type="ChEBI" id="CHEBI:15379"/>
        <dbReference type="ChEBI" id="CHEBI:17499"/>
        <dbReference type="ChEBI" id="CHEBI:30245"/>
        <dbReference type="ChEBI" id="CHEBI:77895"/>
    </reaction>
    <physiologicalReaction direction="left-to-right" evidence="2">
        <dbReference type="Rhea" id="RHEA:75448"/>
    </physiologicalReaction>
</comment>
<comment type="catalytic activity">
    <reaction evidence="2">
        <text>(9Z,12Z)-octadecadienoate + AH2 + O2 = (9S)-hydroxy-(10E,12Z)-octadecadienoate + A + H2O</text>
        <dbReference type="Rhea" id="RHEA:75459"/>
        <dbReference type="ChEBI" id="CHEBI:13193"/>
        <dbReference type="ChEBI" id="CHEBI:15377"/>
        <dbReference type="ChEBI" id="CHEBI:15379"/>
        <dbReference type="ChEBI" id="CHEBI:17499"/>
        <dbReference type="ChEBI" id="CHEBI:30245"/>
        <dbReference type="ChEBI" id="CHEBI:77852"/>
    </reaction>
    <physiologicalReaction direction="left-to-right" evidence="2">
        <dbReference type="Rhea" id="RHEA:75460"/>
    </physiologicalReaction>
</comment>
<comment type="catalytic activity">
    <reaction evidence="2">
        <text>(9Z,12Z)-octadecadienoate + AH2 + O2 = (13S)-hydroxy-(9Z,11E)-octadecadienoate + A + H2O</text>
        <dbReference type="Rhea" id="RHEA:75451"/>
        <dbReference type="ChEBI" id="CHEBI:13193"/>
        <dbReference type="ChEBI" id="CHEBI:15377"/>
        <dbReference type="ChEBI" id="CHEBI:15379"/>
        <dbReference type="ChEBI" id="CHEBI:17499"/>
        <dbReference type="ChEBI" id="CHEBI:30245"/>
        <dbReference type="ChEBI" id="CHEBI:90850"/>
    </reaction>
    <physiologicalReaction direction="left-to-right" evidence="2">
        <dbReference type="Rhea" id="RHEA:75452"/>
    </physiologicalReaction>
</comment>
<comment type="catalytic activity">
    <reaction evidence="2">
        <text>(9Z,12Z)-octadecadienoate + AH2 + O2 = (13R)-hydroxy-(9Z,11E)-octadecadienoate + A + H2O</text>
        <dbReference type="Rhea" id="RHEA:75455"/>
        <dbReference type="ChEBI" id="CHEBI:13193"/>
        <dbReference type="ChEBI" id="CHEBI:15377"/>
        <dbReference type="ChEBI" id="CHEBI:15379"/>
        <dbReference type="ChEBI" id="CHEBI:17499"/>
        <dbReference type="ChEBI" id="CHEBI:30245"/>
        <dbReference type="ChEBI" id="CHEBI:136655"/>
    </reaction>
    <physiologicalReaction direction="left-to-right" evidence="2">
        <dbReference type="Rhea" id="RHEA:75456"/>
    </physiologicalReaction>
</comment>
<comment type="cofactor">
    <cofactor evidence="7 9 17">
        <name>heme b</name>
        <dbReference type="ChEBI" id="CHEBI:60344"/>
    </cofactor>
    <text evidence="7 9 17">Binds 1 heme b (iron(II)-protoporphyrin IX) group per subunit.</text>
</comment>
<comment type="activity regulation">
    <text evidence="7 10">Inhibited by the nonsteroidal anti-inflammatory drugs aspirin, naproxen, diclofenac, meclofenamic acid, indomethacin and their analogs.</text>
</comment>
<comment type="pathway">
    <text evidence="7 9 10 12">Lipid metabolism; prostaglandin biosynthesis.</text>
</comment>
<comment type="subunit">
    <text evidence="5 7 9 11 12 17">Homodimer.</text>
</comment>
<comment type="interaction">
    <interactant intactId="EBI-298933">
        <id>Q05769</id>
    </interactant>
    <interactant intactId="EBI-397596">
        <id>Q9Z0J4</id>
        <label>Nos1</label>
    </interactant>
    <organismsDiffer>false</organismsDiffer>
    <experiments>4</experiments>
</comment>
<comment type="subcellular location">
    <subcellularLocation>
        <location evidence="18">Microsome membrane</location>
        <topology>Peripheral membrane protein</topology>
    </subcellularLocation>
    <subcellularLocation>
        <location evidence="18">Endoplasmic reticulum membrane</location>
        <topology>Peripheral membrane protein</topology>
    </subcellularLocation>
    <subcellularLocation>
        <location evidence="26">Nucleus inner membrane</location>
        <topology>Peripheral membrane protein</topology>
    </subcellularLocation>
    <subcellularLocation>
        <location evidence="26">Nucleus outer membrane</location>
        <topology>Peripheral membrane protein</topology>
    </subcellularLocation>
    <text evidence="1">Detected on the lumenal side of the endoplasmic reticulum and nuclear envelope.</text>
</comment>
<comment type="tissue specificity">
    <text evidence="13">Following colon injury, expressed in the wound bed mesenchyme during the first phase of repair, probably by colonic mesenchymal stem cells (at protein level).</text>
</comment>
<comment type="developmental stage">
    <text evidence="13">During colonic wound repair, highly up-regulated (more than 1600-fold) in the mesenchyme of the wound bed 2 days after injury as compared to uninjured mucosa. Further increase in expression is observed at day 4 following injury (close to 2200-fold). Down-regulated at day 6 (only 93-fold increase as compared to uninjured mucosa).</text>
</comment>
<comment type="induction">
    <text evidence="8">By cytokines and mitogens.</text>
</comment>
<comment type="PTM">
    <text evidence="1">S-nitrosylation by NOS2 (iNOS) activates enzyme activity. S-nitrosylation may take place on different Cys residues in addition to Cys-526.</text>
</comment>
<comment type="PTM">
    <text evidence="15">Acetylated at Ser-565 by SPHK1. During neuroinflammation, acetylation by SPHK1 promotes neuronal secretion of specialized preresolving mediators (SPMs), especially 15-R-lipoxin A4, which results in an increase of phagocytic microglia.</text>
</comment>
<comment type="disruption phenotype">
    <text evidence="13">Mutant mice exhibit defects in colonic mucosal wound repair.</text>
</comment>
<comment type="miscellaneous">
    <text>The conversion of arachidonate to prostaglandin H2 is a 2 step reaction: a cyclooxygenase (COX) reaction which converts arachidonate to prostaglandin G2 (PGG2) and a peroxidase reaction in which PGG2 is reduced to prostaglandin H2 (PGH2). The cyclooxygenase reaction occurs in a hydrophobic channel in the core of the enzyme. The peroxidase reaction occurs at a heme-containing active site located near the protein surface. The nonsteroidal anti-inflammatory drugs (NSAIDs) binding site corresponds to the cyclooxygenase active site.</text>
</comment>
<comment type="miscellaneous">
    <text>Conversion of arachidonate to prostaglandin H2 is mediated by 2 different isozymes: the constitutive PTGS1 and the inducible PTGS2. PTGS1 is expressed constitutively and generally produces prostanoids acutely in response to hormonal stimuli to fine-tune physiological processes requiring instantaneous, continuous regulation (e.g. hemostasis). PTGS2 is inducible and typically produces prostanoids that mediate responses to physiological stresses such as infection and inflammation.</text>
</comment>
<comment type="miscellaneous">
    <text>PTGS1 and PTGS2 are the targets of nonsteroidal anti-inflammatory drugs (NSAIDs) including aspirin and ibuprofen. Aspirin is able to produce an irreversible inactivation of the enzyme through a serine acetylation. Inhibition of the PGHSs with NSAIDs acutely reduces inflammation, pain, and fever, and long-term use of these drugs reduces fatal thrombotic events, as well as the development of colon cancer and Alzheimer's disease. PTGS2 is the principal isozyme responsible for production of inflammatory prostaglandins. New generation PTGSs inhibitors strive to be selective for PTGS2, to avoid side effects such as gastrointestinal complications and ulceration.</text>
</comment>
<comment type="similarity">
    <text evidence="19">Belongs to the prostaglandin G/H synthase family.</text>
</comment>
<reference key="1">
    <citation type="journal article" date="1991" name="J. Biol. Chem.">
        <title>TIS10, a phorbol ester tumor promoter-inducible mRNA from Swiss 3T3 cells, encodes a novel prostaglandin synthase/cyclooxygenase homologue.</title>
        <authorList>
            <person name="Kujubu D.A."/>
            <person name="Fletcher B.S."/>
            <person name="Varnum B.C."/>
            <person name="Lim R.W."/>
            <person name="Herschman H.R."/>
        </authorList>
    </citation>
    <scope>NUCLEOTIDE SEQUENCE [MRNA]</scope>
    <source>
        <strain>SWR/J</strain>
    </source>
</reference>
<reference key="2">
    <citation type="journal article" date="1992" name="J. Biol. Chem.">
        <title>Structure of the mitogen-inducible TIS10 gene and demonstration that the TIS10-encoded protein is a functional prostaglandin G/H synthase.</title>
        <authorList>
            <person name="Fletcher B.S."/>
            <person name="Kujubu D.A."/>
            <person name="Perrin D.M."/>
            <person name="Herschman H.R."/>
        </authorList>
    </citation>
    <scope>NUCLEOTIDE SEQUENCE [GENOMIC DNA]</scope>
    <scope>INDUCTION</scope>
</reference>
<reference key="3">
    <citation type="journal article" date="1992" name="Cell Growth Differ.">
        <title>Identification of an immediate early gene, pghs-B, whose protein product has prostaglandin synthase/cyclooxygenase activity.</title>
        <authorList>
            <person name="Ryseck R.-P."/>
            <person name="Raynoschek C."/>
            <person name="Macdonald-Bravo H."/>
            <person name="Dorfman K."/>
            <person name="Mattei M.-G."/>
            <person name="Bravo R."/>
        </authorList>
    </citation>
    <scope>NUCLEOTIDE SEQUENCE [MRNA]</scope>
</reference>
<reference key="4">
    <citation type="journal article" date="1992" name="Proc. Natl. Acad. Sci. U.S.A.">
        <title>cDNA cloning and functional activity of a glucocorticoid-regulated inflammatory cyclooxygenase.</title>
        <authorList>
            <person name="O'Banion M.K."/>
            <person name="Winn V.D."/>
            <person name="Young D.A."/>
        </authorList>
    </citation>
    <scope>NUCLEOTIDE SEQUENCE [MRNA]</scope>
</reference>
<reference key="5">
    <citation type="journal article" date="2005" name="Science">
        <title>The transcriptional landscape of the mammalian genome.</title>
        <authorList>
            <person name="Carninci P."/>
            <person name="Kasukawa T."/>
            <person name="Katayama S."/>
            <person name="Gough J."/>
            <person name="Frith M.C."/>
            <person name="Maeda N."/>
            <person name="Oyama R."/>
            <person name="Ravasi T."/>
            <person name="Lenhard B."/>
            <person name="Wells C."/>
            <person name="Kodzius R."/>
            <person name="Shimokawa K."/>
            <person name="Bajic V.B."/>
            <person name="Brenner S.E."/>
            <person name="Batalov S."/>
            <person name="Forrest A.R."/>
            <person name="Zavolan M."/>
            <person name="Davis M.J."/>
            <person name="Wilming L.G."/>
            <person name="Aidinis V."/>
            <person name="Allen J.E."/>
            <person name="Ambesi-Impiombato A."/>
            <person name="Apweiler R."/>
            <person name="Aturaliya R.N."/>
            <person name="Bailey T.L."/>
            <person name="Bansal M."/>
            <person name="Baxter L."/>
            <person name="Beisel K.W."/>
            <person name="Bersano T."/>
            <person name="Bono H."/>
            <person name="Chalk A.M."/>
            <person name="Chiu K.P."/>
            <person name="Choudhary V."/>
            <person name="Christoffels A."/>
            <person name="Clutterbuck D.R."/>
            <person name="Crowe M.L."/>
            <person name="Dalla E."/>
            <person name="Dalrymple B.P."/>
            <person name="de Bono B."/>
            <person name="Della Gatta G."/>
            <person name="di Bernardo D."/>
            <person name="Down T."/>
            <person name="Engstrom P."/>
            <person name="Fagiolini M."/>
            <person name="Faulkner G."/>
            <person name="Fletcher C.F."/>
            <person name="Fukushima T."/>
            <person name="Furuno M."/>
            <person name="Futaki S."/>
            <person name="Gariboldi M."/>
            <person name="Georgii-Hemming P."/>
            <person name="Gingeras T.R."/>
            <person name="Gojobori T."/>
            <person name="Green R.E."/>
            <person name="Gustincich S."/>
            <person name="Harbers M."/>
            <person name="Hayashi Y."/>
            <person name="Hensch T.K."/>
            <person name="Hirokawa N."/>
            <person name="Hill D."/>
            <person name="Huminiecki L."/>
            <person name="Iacono M."/>
            <person name="Ikeo K."/>
            <person name="Iwama A."/>
            <person name="Ishikawa T."/>
            <person name="Jakt M."/>
            <person name="Kanapin A."/>
            <person name="Katoh M."/>
            <person name="Kawasawa Y."/>
            <person name="Kelso J."/>
            <person name="Kitamura H."/>
            <person name="Kitano H."/>
            <person name="Kollias G."/>
            <person name="Krishnan S.P."/>
            <person name="Kruger A."/>
            <person name="Kummerfeld S.K."/>
            <person name="Kurochkin I.V."/>
            <person name="Lareau L.F."/>
            <person name="Lazarevic D."/>
            <person name="Lipovich L."/>
            <person name="Liu J."/>
            <person name="Liuni S."/>
            <person name="McWilliam S."/>
            <person name="Madan Babu M."/>
            <person name="Madera M."/>
            <person name="Marchionni L."/>
            <person name="Matsuda H."/>
            <person name="Matsuzawa S."/>
            <person name="Miki H."/>
            <person name="Mignone F."/>
            <person name="Miyake S."/>
            <person name="Morris K."/>
            <person name="Mottagui-Tabar S."/>
            <person name="Mulder N."/>
            <person name="Nakano N."/>
            <person name="Nakauchi H."/>
            <person name="Ng P."/>
            <person name="Nilsson R."/>
            <person name="Nishiguchi S."/>
            <person name="Nishikawa S."/>
            <person name="Nori F."/>
            <person name="Ohara O."/>
            <person name="Okazaki Y."/>
            <person name="Orlando V."/>
            <person name="Pang K.C."/>
            <person name="Pavan W.J."/>
            <person name="Pavesi G."/>
            <person name="Pesole G."/>
            <person name="Petrovsky N."/>
            <person name="Piazza S."/>
            <person name="Reed J."/>
            <person name="Reid J.F."/>
            <person name="Ring B.Z."/>
            <person name="Ringwald M."/>
            <person name="Rost B."/>
            <person name="Ruan Y."/>
            <person name="Salzberg S.L."/>
            <person name="Sandelin A."/>
            <person name="Schneider C."/>
            <person name="Schoenbach C."/>
            <person name="Sekiguchi K."/>
            <person name="Semple C.A."/>
            <person name="Seno S."/>
            <person name="Sessa L."/>
            <person name="Sheng Y."/>
            <person name="Shibata Y."/>
            <person name="Shimada H."/>
            <person name="Shimada K."/>
            <person name="Silva D."/>
            <person name="Sinclair B."/>
            <person name="Sperling S."/>
            <person name="Stupka E."/>
            <person name="Sugiura K."/>
            <person name="Sultana R."/>
            <person name="Takenaka Y."/>
            <person name="Taki K."/>
            <person name="Tammoja K."/>
            <person name="Tan S.L."/>
            <person name="Tang S."/>
            <person name="Taylor M.S."/>
            <person name="Tegner J."/>
            <person name="Teichmann S.A."/>
            <person name="Ueda H.R."/>
            <person name="van Nimwegen E."/>
            <person name="Verardo R."/>
            <person name="Wei C.L."/>
            <person name="Yagi K."/>
            <person name="Yamanishi H."/>
            <person name="Zabarovsky E."/>
            <person name="Zhu S."/>
            <person name="Zimmer A."/>
            <person name="Hide W."/>
            <person name="Bult C."/>
            <person name="Grimmond S.M."/>
            <person name="Teasdale R.D."/>
            <person name="Liu E.T."/>
            <person name="Brusic V."/>
            <person name="Quackenbush J."/>
            <person name="Wahlestedt C."/>
            <person name="Mattick J.S."/>
            <person name="Hume D.A."/>
            <person name="Kai C."/>
            <person name="Sasaki D."/>
            <person name="Tomaru Y."/>
            <person name="Fukuda S."/>
            <person name="Kanamori-Katayama M."/>
            <person name="Suzuki M."/>
            <person name="Aoki J."/>
            <person name="Arakawa T."/>
            <person name="Iida J."/>
            <person name="Imamura K."/>
            <person name="Itoh M."/>
            <person name="Kato T."/>
            <person name="Kawaji H."/>
            <person name="Kawagashira N."/>
            <person name="Kawashima T."/>
            <person name="Kojima M."/>
            <person name="Kondo S."/>
            <person name="Konno H."/>
            <person name="Nakano K."/>
            <person name="Ninomiya N."/>
            <person name="Nishio T."/>
            <person name="Okada M."/>
            <person name="Plessy C."/>
            <person name="Shibata K."/>
            <person name="Shiraki T."/>
            <person name="Suzuki S."/>
            <person name="Tagami M."/>
            <person name="Waki K."/>
            <person name="Watahiki A."/>
            <person name="Okamura-Oho Y."/>
            <person name="Suzuki H."/>
            <person name="Kawai J."/>
            <person name="Hayashizaki Y."/>
        </authorList>
    </citation>
    <scope>NUCLEOTIDE SEQUENCE [LARGE SCALE MRNA]</scope>
    <source>
        <strain>C57BL/6J</strain>
        <strain>NOD</strain>
        <tissue>Hippocampus</tissue>
        <tissue>Mammary gland</tissue>
        <tissue>Spleen</tissue>
    </source>
</reference>
<reference key="6">
    <citation type="submission" date="2005-09" db="EMBL/GenBank/DDBJ databases">
        <authorList>
            <person name="Mural R.J."/>
            <person name="Adams M.D."/>
            <person name="Myers E.W."/>
            <person name="Smith H.O."/>
            <person name="Venter J.C."/>
        </authorList>
    </citation>
    <scope>NUCLEOTIDE SEQUENCE [LARGE SCALE GENOMIC DNA]</scope>
</reference>
<reference key="7">
    <citation type="journal article" date="1991" name="J. Biol. Chem.">
        <title>A serum- and glucocorticoid-regulated 4-kilobase mRNA encodes a cyclooxygenase-related protein.</title>
        <authorList>
            <person name="O'Banion M.K."/>
            <person name="Sadowski H.B."/>
            <person name="Winn V."/>
            <person name="Young D.A."/>
        </authorList>
    </citation>
    <scope>NUCLEOTIDE SEQUENCE [MRNA] OF 281-360</scope>
</reference>
<reference key="8">
    <citation type="journal article" date="1993" name="J. Leukoc. Biol.">
        <title>The mouse macrophage activation-associated marker protein, p71/73, is an inducible prostaglandin endoperoxide synthase (cyclooxygenase).</title>
        <authorList>
            <person name="Phillips T.A."/>
            <person name="Kujubu D.A."/>
            <person name="Mackay R.J."/>
            <person name="Herschman H.R."/>
            <person name="Russell S.W."/>
            <person name="Pace J.L."/>
        </authorList>
    </citation>
    <scope>PARTIAL PROTEIN SEQUENCE</scope>
</reference>
<reference key="9">
    <citation type="journal article" date="1993" name="J. Biol. Chem.">
        <title>N-glycosylation of prostaglandin endoperoxide synthases-1 and -2 and their orientations in the endoplasmic reticulum.</title>
        <authorList>
            <person name="Otto J.C."/>
            <person name="Dewitt D.L."/>
            <person name="Smith W.L."/>
        </authorList>
    </citation>
    <scope>GLYCOSYLATION AT ASN-53; ASN-130; ASN-396 AND ASN-580</scope>
    <scope>LACK OF GLYCOSYLATION AT ASN-592</scope>
</reference>
<reference key="10">
    <citation type="journal article" date="1998" name="J. Biol. Chem.">
        <title>Subcellular localization of prostaglandin endoperoxide H synthases-1 and -2 by immunoelectron microscopy.</title>
        <authorList>
            <person name="Spencer A.G."/>
            <person name="Woods J.W."/>
            <person name="Arakawa T."/>
            <person name="Singer I.I."/>
            <person name="Smith W.L."/>
        </authorList>
    </citation>
    <scope>SUBCELLULAR LOCATION</scope>
</reference>
<reference key="11">
    <citation type="journal article" date="2002" name="J. Biol. Chem.">
        <title>Metabolism of the endocannabinoids, 2-arachidonylglycerol and anandamide, into prostaglandin, thromboxane, and prostacyclin glycerol esters and ethanolamides.</title>
        <authorList>
            <person name="Kozak K.R."/>
            <person name="Crews B.C."/>
            <person name="Morrow J.D."/>
            <person name="Wang L.H."/>
            <person name="Ma Y.H."/>
            <person name="Weinander R."/>
            <person name="Jakobsson P.J."/>
            <person name="Marnett L.J."/>
        </authorList>
    </citation>
    <scope>CATALYTIC ACTIVITY</scope>
</reference>
<reference key="12">
    <citation type="journal article" date="2012" name="Gastroenterology">
        <title>Igf2bp1 is required for full induction of Ptgs2 mRNA in colonic mesenchymal stem cells in mice.</title>
        <authorList>
            <person name="Manieri N.A."/>
            <person name="Drylewicz M.R."/>
            <person name="Miyoshi H."/>
            <person name="Stappenbeck T.S."/>
        </authorList>
    </citation>
    <scope>TISSUE SPECIFICITY</scope>
    <scope>DEVELOPMENTAL STAGE</scope>
    <scope>DISRUPTION PHENOTYPE</scope>
</reference>
<reference key="13">
    <citation type="journal article" date="2012" name="J. Biol. Chem.">
        <title>Prostaglandin H synthase-2-catalyzed oxygenation of 2-arachidonoylglycerol is more sensitive to peroxide tone than oxygenation of arachidonic acid.</title>
        <authorList>
            <person name="Musee J."/>
            <person name="Marnett L.J."/>
        </authorList>
    </citation>
    <scope>FUNCTION</scope>
    <scope>CATALYTIC ACTIVITY</scope>
    <scope>MUTAGENESIS OF HIS-374</scope>
</reference>
<reference key="14">
    <citation type="journal article" date="2018" name="Nat. Commun.">
        <title>Neuronal SphK1 acetylates COX2 and contributes to pathogenesis in a model of Alzheimer's Disease.</title>
        <authorList>
            <person name="Lee J.Y."/>
            <person name="Han S.H."/>
            <person name="Park M.H."/>
            <person name="Baek B."/>
            <person name="Song I.S."/>
            <person name="Choi M.K."/>
            <person name="Takuwa Y."/>
            <person name="Ryu H."/>
            <person name="Kim S.H."/>
            <person name="He X."/>
            <person name="Schuchman E.H."/>
            <person name="Bae J.S."/>
            <person name="Jin H.K."/>
        </authorList>
    </citation>
    <scope>FUNCTION</scope>
    <scope>ACETYLATION AT SER-565</scope>
    <scope>MUTAGENESIS OF SER-565</scope>
</reference>
<reference key="15">
    <citation type="journal article" date="2000" name="Annu. Rev. Biochem.">
        <title>Cyclooxygenases: structural, cellular, and molecular biology.</title>
        <authorList>
            <person name="Smith W.L."/>
            <person name="DeWitt D.L."/>
            <person name="Garavito R.M."/>
        </authorList>
    </citation>
    <scope>REVIEW ON FUNCTION; TISSUE SPECIFICITY AND INHIBITION BY NSAIDS</scope>
</reference>
<reference key="16">
    <citation type="journal article" date="2014" name="World J. Gastrointest. Pharmacol. Ther.">
        <title>Aspirin, cyclooxygenase inhibition and colorectal cancer.</title>
        <authorList>
            <person name="Sostres C."/>
            <person name="Gargallo C.J."/>
            <person name="Lanas A."/>
        </authorList>
    </citation>
    <scope>REVIEW ON FUNCTION; INHIBITION BY ASPIRIN AND INVOLVEMENT IN COLORECTAL CANCER</scope>
</reference>
<reference evidence="29 45 51 66 72" key="17">
    <citation type="journal article" date="1996" name="Nature">
        <title>Structural basis for selective inhibition of cyclooxygenase-2 by anti-inflammatory agents.</title>
        <authorList>
            <person name="Kurumbail R.G."/>
            <person name="Stevens A.M."/>
            <person name="Gierse J.K."/>
            <person name="McDonald J.J."/>
            <person name="Stegeman R.A."/>
            <person name="Pay J.Y."/>
            <person name="Gildehaus D."/>
            <person name="Miyashiro J.M."/>
            <person name="Penning T.D."/>
            <person name="Seibert K."/>
            <person name="Isakson P.C."/>
            <person name="Stallings W.C."/>
        </authorList>
    </citation>
    <scope>X-RAY CRYSTALLOGRAPHY (2.5 ANGSTROMS) IN COMPLEX WITH (S)-FLURBIPROFEN; INDOMETHACIN; HEME AND 1-PHENYLSULFONAMIDE-3-TRIFLUOROMETHYL-5-PARABROMOPHENYLPYRAZOLE</scope>
    <scope>COFACTOR</scope>
    <scope>GLYCOSYLATION AT ASN-53; ASN-130 AND ASN-396</scope>
    <scope>DISULFIDE BONDS</scope>
</reference>
<reference key="18">
    <citation type="journal article" date="1997" name="Nature">
        <authorList>
            <person name="Kurumbail R.G."/>
            <person name="Stevens A.M."/>
            <person name="Gierse J.K."/>
            <person name="McDonald J.J."/>
            <person name="Stegeman R.A."/>
            <person name="Pay J.Y."/>
            <person name="Gildehaus D."/>
            <person name="Miyashiro J.M."/>
            <person name="Penning T.D."/>
            <person name="Seibert K."/>
            <person name="Isakson P.C."/>
            <person name="Stallings W.C."/>
        </authorList>
    </citation>
    <scope>ERRATUM OF PUBMED:8967954</scope>
</reference>
<reference evidence="28 30" key="19">
    <citation type="journal article" date="2000" name="Nature">
        <title>Structural insights into the stereochemistry of the cyclooxygenase reaction.</title>
        <authorList>
            <person name="Kiefer J.R."/>
            <person name="Pawlitz J.L."/>
            <person name="Moreland K.T."/>
            <person name="Stegeman R.A."/>
            <person name="Hood W.F."/>
            <person name="Gierse J.K."/>
            <person name="Stevens A.M."/>
            <person name="Goodwin D.C."/>
            <person name="Rowlinson S.W."/>
            <person name="Marnett L.J."/>
            <person name="Stallings W.C."/>
            <person name="Kurumbail R.G."/>
        </authorList>
    </citation>
    <scope>X-RAY CRYSTALLOGRAPHY (2.40 ANGSTROMS) OF 18-569 IN COMPLEX WITH ARACHIDONIC ACID</scope>
    <scope>GLYCOSYLATION AT ASN-53; ASN-130 AND ASN-396</scope>
    <scope>DISULFIDE BONDS</scope>
</reference>
<reference evidence="31" key="20">
    <citation type="journal article" date="2003" name="J. Biol. Chem.">
        <title>A novel mechanism of cyclooxygenase-2 inhibition involving interactions with Ser-530 and Tyr-385.</title>
        <authorList>
            <person name="Rowlinson S.W."/>
            <person name="Kiefer J.R."/>
            <person name="Prusakiewicz J.J."/>
            <person name="Pawlitz J.L."/>
            <person name="Kozak K.R."/>
            <person name="Kalgutkar A.S."/>
            <person name="Stallings W.C."/>
            <person name="Kurumbail R.G."/>
            <person name="Marnett L.J."/>
        </authorList>
    </citation>
    <scope>X-RAY CRYSTALLOGRAPHY (2.90 ANGSTROMS) IN COMPLEX WITH HEME AND DICLOFENAC</scope>
    <scope>CATALYTIC ACTIVITY</scope>
    <scope>FUNCTION</scope>
    <scope>COFACTOR</scope>
    <scope>DISULFIDE BONDS</scope>
    <scope>ACTIVITY REGULATION</scope>
    <scope>GLYCOSYLATION AT ASN-53; ASN-130 AND ASN-396</scope>
</reference>
<reference evidence="32 33 34 35" key="21">
    <citation type="journal article" date="2010" name="J. Biol. Chem.">
        <title>Structural basis of fatty acid substrate binding to cyclooxygenase-2.</title>
        <authorList>
            <person name="Vecchio A.J."/>
            <person name="Simmons D.M."/>
            <person name="Malkowski M.G."/>
        </authorList>
    </citation>
    <scope>X-RAY CRYSTALLOGRAPHY (2.10 ANGSTROMS) OF 20-604 IN COMPLEX WITH HEME; ACRYLIC ACID; ARACHIDONIC ACID AND DOCOSAHEXAENOIC ACID</scope>
    <scope>CATALYTIC ACTIVITY</scope>
    <scope>ACTIVE SITE</scope>
    <scope>SUBUNIT</scope>
    <scope>COFACTOR</scope>
    <scope>FUNCTION</scope>
    <scope>DISULFIDE BONDS</scope>
    <scope>MUTAGENESIS OF LEU-517 AND ASN-580</scope>
    <scope>GLYCOSYLATION AT ASN-53; ASN-130; ASN-396 AND ASN-580</scope>
</reference>
<reference evidence="40 41" key="22">
    <citation type="journal article" date="2010" name="J. Biol. Chem.">
        <title>Molecular basis for cyclooxygenase inhibition by the non-steroidal anti-inflammatory drug naproxen.</title>
        <authorList>
            <person name="Duggan K.C."/>
            <person name="Walters M.J."/>
            <person name="Musee J."/>
            <person name="Harp J.M."/>
            <person name="Kiefer J.R."/>
            <person name="Oates J.A."/>
            <person name="Marnett L.J."/>
        </authorList>
    </citation>
    <scope>X-RAY CRYSTALLOGRAPHY (1.73 ANGSTROMS) OF 18-604 IN COMPLEXES WITH HEME AND NAPROXEN ANALOGS</scope>
    <scope>FUNCTION</scope>
    <scope>CATALYTIC ACTIVITY</scope>
    <scope>ACTIVITY REGULATION</scope>
    <scope>DISULFIDE BONDS</scope>
    <scope>GLYCOSYLATION AT ASN-53; ASN-130 AND ASN-396</scope>
</reference>
<reference evidence="47" key="23">
    <citation type="journal article" date="2011" name="J. Biol. Chem.">
        <title>Human cyclooxygenase-2 is a sequence homodimer that functions as a conformational heterodimer.</title>
        <authorList>
            <person name="Dong L."/>
            <person name="Vecchio A.J."/>
            <person name="Sharma N.P."/>
            <person name="Jurban B.J."/>
            <person name="Malkowski M.G."/>
            <person name="Smith W.L."/>
        </authorList>
    </citation>
    <scope>X-RAY CRYSTALLOGRAPHY (2.10 ANGSTROMS)</scope>
    <scope>GLYCOSYLATION AT ASN-53; ASN-130 AND ASN-396</scope>
    <scope>DISULFIDE BONDS</scope>
</reference>
<reference evidence="38 43 44" key="24">
    <citation type="journal article" date="2011" name="J. Biol. Chem.">
        <title>The structural basis of endocannabinoid oxygenation by cyclooxygenase-2.</title>
        <authorList>
            <person name="Vecchio A.J."/>
            <person name="Malkowski M.G."/>
        </authorList>
    </citation>
    <scope>X-RAY CRYSTALLOGRAPHY (2.20 ANGSTROMS) OF 20-599 IN COMPLEX WITH HEME; ACRYLIC ACID AND ARACHIDONIC ACID</scope>
    <scope>FUNCTION</scope>
    <scope>CATALYTIC ACTIVITY</scope>
    <scope>GLYCOSYLATION AT ASN-53; ASN-130 AND ASN-396</scope>
    <scope>DISULFIDE BONDS</scope>
</reference>
<sequence length="604" mass="69013">MLFRAVLLCAALGLSQAANPCCSNPCQNRGECMSTGFDQYKCDCTRTGFYGENCTTPEFLTRIKLLLKPTPNTVHYILTHFKGVWNIVNNIPFLRSLIMKYVLTSRSYLIDSPPTYNVHYGYKSWEAFSNLSYYTRALPPVADDCPTPMGVKGNKELPDSKEVLEKVLLRREFIPDPQGSNMMFAFFAQHFTHQFFKTDHKRGPGFTRGLGHGVDLNHIYGETLDRQHKLRLFKDGKLKYQVIGGEVYPPTVKDTQVEMIYPPHIPENLQFAVGQEVFGLVPGLMMYATIWLREHNRVCDILKQEHPEWGDEQLFQTSRLILIGETIKIVIEDYVQHLSGYHFKLKFDPELLFNQQFQYQNRIASEFNTLYHWHPLLPDTFNIEDQEYSFKQFLYNNSILLEHGLTQFVESFTRQIAGRVAGGRNVPIAVQAVAKASIDQSREMKYQSLNEYRKRFSLKPYTSFEELTGEKEMAAELKALYSDIDVMELYPALLVEKPRPDAIFGETMVELGAPFSLKGLMGNPICSPQYWKPSTFGGEVGFKIINTASIQSLICNNVKGCPFTSFNVQDPQPTKTATINASASHSRLDDINPTVLIKRRSTEL</sequence>
<evidence type="ECO:0000250" key="1">
    <source>
        <dbReference type="UniProtKB" id="P35354"/>
    </source>
</evidence>
<evidence type="ECO:0000250" key="2">
    <source>
        <dbReference type="UniProtKB" id="P79208"/>
    </source>
</evidence>
<evidence type="ECO:0000255" key="3">
    <source>
        <dbReference type="PROSITE-ProRule" id="PRU00076"/>
    </source>
</evidence>
<evidence type="ECO:0000255" key="4">
    <source>
        <dbReference type="PROSITE-ProRule" id="PRU00298"/>
    </source>
</evidence>
<evidence type="ECO:0000269" key="5">
    <source>
    </source>
</evidence>
<evidence type="ECO:0000269" key="6">
    <source>
    </source>
</evidence>
<evidence type="ECO:0000269" key="7">
    <source>
    </source>
</evidence>
<evidence type="ECO:0000269" key="8">
    <source>
    </source>
</evidence>
<evidence type="ECO:0000269" key="9">
    <source>
    </source>
</evidence>
<evidence type="ECO:0000269" key="10">
    <source>
    </source>
</evidence>
<evidence type="ECO:0000269" key="11">
    <source>
    </source>
</evidence>
<evidence type="ECO:0000269" key="12">
    <source>
    </source>
</evidence>
<evidence type="ECO:0000269" key="13">
    <source>
    </source>
</evidence>
<evidence type="ECO:0000269" key="14">
    <source>
    </source>
</evidence>
<evidence type="ECO:0000269" key="15">
    <source>
    </source>
</evidence>
<evidence type="ECO:0000269" key="16">
    <source>
    </source>
</evidence>
<evidence type="ECO:0000269" key="17">
    <source>
    </source>
</evidence>
<evidence type="ECO:0000269" key="18">
    <source>
    </source>
</evidence>
<evidence type="ECO:0000305" key="19"/>
<evidence type="ECO:0000305" key="20">
    <source>
    </source>
</evidence>
<evidence type="ECO:0000305" key="21">
    <source>
    </source>
</evidence>
<evidence type="ECO:0000305" key="22">
    <source>
    </source>
</evidence>
<evidence type="ECO:0000305" key="23">
    <source>
    </source>
</evidence>
<evidence type="ECO:0000305" key="24">
    <source>
    </source>
</evidence>
<evidence type="ECO:0000305" key="25">
    <source>
    </source>
</evidence>
<evidence type="ECO:0000305" key="26">
    <source>
    </source>
</evidence>
<evidence type="ECO:0000312" key="27">
    <source>
        <dbReference type="MGI" id="MGI:97798"/>
    </source>
</evidence>
<evidence type="ECO:0007744" key="28">
    <source>
        <dbReference type="PDB" id="1CVU"/>
    </source>
</evidence>
<evidence type="ECO:0007744" key="29">
    <source>
        <dbReference type="PDB" id="1CX2"/>
    </source>
</evidence>
<evidence type="ECO:0007744" key="30">
    <source>
        <dbReference type="PDB" id="1DDX"/>
    </source>
</evidence>
<evidence type="ECO:0007744" key="31">
    <source>
        <dbReference type="PDB" id="1PXX"/>
    </source>
</evidence>
<evidence type="ECO:0007744" key="32">
    <source>
        <dbReference type="PDB" id="3HS5"/>
    </source>
</evidence>
<evidence type="ECO:0007744" key="33">
    <source>
        <dbReference type="PDB" id="3HS6"/>
    </source>
</evidence>
<evidence type="ECO:0007744" key="34">
    <source>
        <dbReference type="PDB" id="3HS7"/>
    </source>
</evidence>
<evidence type="ECO:0007744" key="35">
    <source>
        <dbReference type="PDB" id="3KRK"/>
    </source>
</evidence>
<evidence type="ECO:0007744" key="36">
    <source>
        <dbReference type="PDB" id="3LN0"/>
    </source>
</evidence>
<evidence type="ECO:0007744" key="37">
    <source>
        <dbReference type="PDB" id="3LN1"/>
    </source>
</evidence>
<evidence type="ECO:0007744" key="38">
    <source>
        <dbReference type="PDB" id="3MDL"/>
    </source>
</evidence>
<evidence type="ECO:0007744" key="39">
    <source>
        <dbReference type="PDB" id="3MQE"/>
    </source>
</evidence>
<evidence type="ECO:0007744" key="40">
    <source>
        <dbReference type="PDB" id="3NT1"/>
    </source>
</evidence>
<evidence type="ECO:0007744" key="41">
    <source>
        <dbReference type="PDB" id="3NTB"/>
    </source>
</evidence>
<evidence type="ECO:0007744" key="42">
    <source>
        <dbReference type="PDB" id="3NTG"/>
    </source>
</evidence>
<evidence type="ECO:0007744" key="43">
    <source>
        <dbReference type="PDB" id="3OLT"/>
    </source>
</evidence>
<evidence type="ECO:0007744" key="44">
    <source>
        <dbReference type="PDB" id="3OLU"/>
    </source>
</evidence>
<evidence type="ECO:0007744" key="45">
    <source>
        <dbReference type="PDB" id="3PGH"/>
    </source>
</evidence>
<evidence type="ECO:0007744" key="46">
    <source>
        <dbReference type="PDB" id="3Q7D"/>
    </source>
</evidence>
<evidence type="ECO:0007744" key="47">
    <source>
        <dbReference type="PDB" id="3QH0"/>
    </source>
</evidence>
<evidence type="ECO:0007744" key="48">
    <source>
        <dbReference type="PDB" id="3QMO"/>
    </source>
</evidence>
<evidence type="ECO:0007744" key="49">
    <source>
        <dbReference type="PDB" id="3RR3"/>
    </source>
</evidence>
<evidence type="ECO:0007744" key="50">
    <source>
        <dbReference type="PDB" id="3TZI"/>
    </source>
</evidence>
<evidence type="ECO:0007744" key="51">
    <source>
        <dbReference type="PDB" id="4COX"/>
    </source>
</evidence>
<evidence type="ECO:0007744" key="52">
    <source>
        <dbReference type="PDB" id="4E1G"/>
    </source>
</evidence>
<evidence type="ECO:0007744" key="53">
    <source>
        <dbReference type="PDB" id="4FM5"/>
    </source>
</evidence>
<evidence type="ECO:0007744" key="54">
    <source>
        <dbReference type="PDB" id="4M10"/>
    </source>
</evidence>
<evidence type="ECO:0007744" key="55">
    <source>
        <dbReference type="PDB" id="4M11"/>
    </source>
</evidence>
<evidence type="ECO:0007744" key="56">
    <source>
        <dbReference type="PDB" id="4OTJ"/>
    </source>
</evidence>
<evidence type="ECO:0007744" key="57">
    <source>
        <dbReference type="PDB" id="4OTY"/>
    </source>
</evidence>
<evidence type="ECO:0007744" key="58">
    <source>
        <dbReference type="PDB" id="4PH9"/>
    </source>
</evidence>
<evidence type="ECO:0007744" key="59">
    <source>
        <dbReference type="PDB" id="4RRW"/>
    </source>
</evidence>
<evidence type="ECO:0007744" key="60">
    <source>
        <dbReference type="PDB" id="4RRX"/>
    </source>
</evidence>
<evidence type="ECO:0007744" key="61">
    <source>
        <dbReference type="PDB" id="4RRY"/>
    </source>
</evidence>
<evidence type="ECO:0007744" key="62">
    <source>
        <dbReference type="PDB" id="4RRZ"/>
    </source>
</evidence>
<evidence type="ECO:0007744" key="63">
    <source>
        <dbReference type="PDB" id="4RS0"/>
    </source>
</evidence>
<evidence type="ECO:0007744" key="64">
    <source>
        <dbReference type="PDB" id="4RUT"/>
    </source>
</evidence>
<evidence type="ECO:0007744" key="65">
    <source>
        <dbReference type="PDB" id="4Z0L"/>
    </source>
</evidence>
<evidence type="ECO:0007744" key="66">
    <source>
        <dbReference type="PDB" id="5COX"/>
    </source>
</evidence>
<evidence type="ECO:0007744" key="67">
    <source>
        <dbReference type="PDB" id="5FDQ"/>
    </source>
</evidence>
<evidence type="ECO:0007744" key="68">
    <source>
        <dbReference type="PDB" id="5JVY"/>
    </source>
</evidence>
<evidence type="ECO:0007744" key="69">
    <source>
        <dbReference type="PDB" id="5JVZ"/>
    </source>
</evidence>
<evidence type="ECO:0007744" key="70">
    <source>
        <dbReference type="PDB" id="5JW1"/>
    </source>
</evidence>
<evidence type="ECO:0007744" key="71">
    <source>
        <dbReference type="PDB" id="5W58"/>
    </source>
</evidence>
<evidence type="ECO:0007744" key="72">
    <source>
        <dbReference type="PDB" id="6COX"/>
    </source>
</evidence>
<evidence type="ECO:0007829" key="73">
    <source>
        <dbReference type="PDB" id="1DDX"/>
    </source>
</evidence>
<evidence type="ECO:0007829" key="74">
    <source>
        <dbReference type="PDB" id="3NT1"/>
    </source>
</evidence>
<evidence type="ECO:0007829" key="75">
    <source>
        <dbReference type="PDB" id="3Q7D"/>
    </source>
</evidence>
<evidence type="ECO:0007829" key="76">
    <source>
        <dbReference type="PDB" id="4PH9"/>
    </source>
</evidence>
<evidence type="ECO:0007829" key="77">
    <source>
        <dbReference type="PDB" id="4RRX"/>
    </source>
</evidence>
<evidence type="ECO:0007829" key="78">
    <source>
        <dbReference type="PDB" id="5JW1"/>
    </source>
</evidence>
<evidence type="ECO:0007829" key="79">
    <source>
        <dbReference type="PDB" id="6COX"/>
    </source>
</evidence>
<evidence type="ECO:0007829" key="80">
    <source>
        <dbReference type="PDB" id="8ET0"/>
    </source>
</evidence>
<organism>
    <name type="scientific">Mus musculus</name>
    <name type="common">Mouse</name>
    <dbReference type="NCBI Taxonomy" id="10090"/>
    <lineage>
        <taxon>Eukaryota</taxon>
        <taxon>Metazoa</taxon>
        <taxon>Chordata</taxon>
        <taxon>Craniata</taxon>
        <taxon>Vertebrata</taxon>
        <taxon>Euteleostomi</taxon>
        <taxon>Mammalia</taxon>
        <taxon>Eutheria</taxon>
        <taxon>Euarchontoglires</taxon>
        <taxon>Glires</taxon>
        <taxon>Rodentia</taxon>
        <taxon>Myomorpha</taxon>
        <taxon>Muroidea</taxon>
        <taxon>Muridae</taxon>
        <taxon>Murinae</taxon>
        <taxon>Mus</taxon>
        <taxon>Mus</taxon>
    </lineage>
</organism>
<dbReference type="EC" id="1.14.99.1" evidence="7 9 10 12 14"/>
<dbReference type="EMBL" id="M64291">
    <property type="protein sequence ID" value="AAA39924.1"/>
    <property type="molecule type" value="mRNA"/>
</dbReference>
<dbReference type="EMBL" id="M94967">
    <property type="protein sequence ID" value="AAA39918.1"/>
    <property type="molecule type" value="mRNA"/>
</dbReference>
<dbReference type="EMBL" id="M82866">
    <property type="protein sequence ID" value="AAA40448.1"/>
    <property type="molecule type" value="Genomic_DNA"/>
</dbReference>
<dbReference type="EMBL" id="M82862">
    <property type="protein sequence ID" value="AAA40448.1"/>
    <property type="status" value="JOINED"/>
    <property type="molecule type" value="Genomic_DNA"/>
</dbReference>
<dbReference type="EMBL" id="M82863">
    <property type="protein sequence ID" value="AAA40448.1"/>
    <property type="status" value="JOINED"/>
    <property type="molecule type" value="Genomic_DNA"/>
</dbReference>
<dbReference type="EMBL" id="M82864">
    <property type="protein sequence ID" value="AAA40448.1"/>
    <property type="status" value="JOINED"/>
    <property type="molecule type" value="Genomic_DNA"/>
</dbReference>
<dbReference type="EMBL" id="M82865">
    <property type="protein sequence ID" value="AAA40448.1"/>
    <property type="status" value="JOINED"/>
    <property type="molecule type" value="Genomic_DNA"/>
</dbReference>
<dbReference type="EMBL" id="M88242">
    <property type="protein sequence ID" value="AAA37740.1"/>
    <property type="molecule type" value="mRNA"/>
</dbReference>
<dbReference type="EMBL" id="AK049923">
    <property type="protein sequence ID" value="BAC33986.1"/>
    <property type="molecule type" value="mRNA"/>
</dbReference>
<dbReference type="EMBL" id="AK144956">
    <property type="protein sequence ID" value="BAE26154.1"/>
    <property type="molecule type" value="mRNA"/>
</dbReference>
<dbReference type="EMBL" id="AK166221">
    <property type="protein sequence ID" value="BAE38639.1"/>
    <property type="molecule type" value="mRNA"/>
</dbReference>
<dbReference type="EMBL" id="AK172161">
    <property type="protein sequence ID" value="BAE42855.1"/>
    <property type="molecule type" value="mRNA"/>
</dbReference>
<dbReference type="EMBL" id="CH466520">
    <property type="protein sequence ID" value="EDL39487.1"/>
    <property type="molecule type" value="Genomic_DNA"/>
</dbReference>
<dbReference type="CCDS" id="CCDS15353.1"/>
<dbReference type="PIR" id="A49010">
    <property type="entry name" value="A49010"/>
</dbReference>
<dbReference type="RefSeq" id="NP_035328.2">
    <property type="nucleotide sequence ID" value="NM_011198.4"/>
</dbReference>
<dbReference type="PDB" id="1CVU">
    <property type="method" value="X-ray"/>
    <property type="resolution" value="2.40 A"/>
    <property type="chains" value="A/B=18-569"/>
</dbReference>
<dbReference type="PDB" id="1CX2">
    <property type="method" value="X-ray"/>
    <property type="resolution" value="3.00 A"/>
    <property type="chains" value="A/B/C/D=18-604"/>
</dbReference>
<dbReference type="PDB" id="1DDX">
    <property type="method" value="X-ray"/>
    <property type="resolution" value="3.00 A"/>
    <property type="chains" value="A/B/C/D=18-569"/>
</dbReference>
<dbReference type="PDB" id="1PXX">
    <property type="method" value="X-ray"/>
    <property type="resolution" value="2.90 A"/>
    <property type="chains" value="A/B/C/D=1-604"/>
</dbReference>
<dbReference type="PDB" id="3HS5">
    <property type="method" value="X-ray"/>
    <property type="resolution" value="2.10 A"/>
    <property type="chains" value="A/B=20-604"/>
</dbReference>
<dbReference type="PDB" id="3HS6">
    <property type="method" value="X-ray"/>
    <property type="resolution" value="2.40 A"/>
    <property type="chains" value="A/B=20-604"/>
</dbReference>
<dbReference type="PDB" id="3HS7">
    <property type="method" value="X-ray"/>
    <property type="resolution" value="2.65 A"/>
    <property type="chains" value="A/B=20-604"/>
</dbReference>
<dbReference type="PDB" id="3KRK">
    <property type="method" value="X-ray"/>
    <property type="resolution" value="2.40 A"/>
    <property type="chains" value="A/B=20-604"/>
</dbReference>
<dbReference type="PDB" id="3LN0">
    <property type="method" value="X-ray"/>
    <property type="resolution" value="2.20 A"/>
    <property type="chains" value="A/B/C/D=18-604"/>
</dbReference>
<dbReference type="PDB" id="3LN1">
    <property type="method" value="X-ray"/>
    <property type="resolution" value="2.40 A"/>
    <property type="chains" value="A/B/C/D=18-604"/>
</dbReference>
<dbReference type="PDB" id="3MDL">
    <property type="method" value="X-ray"/>
    <property type="resolution" value="2.20 A"/>
    <property type="chains" value="A/B=20-599"/>
</dbReference>
<dbReference type="PDB" id="3MQE">
    <property type="method" value="X-ray"/>
    <property type="resolution" value="2.80 A"/>
    <property type="chains" value="A/B/C/D=18-604"/>
</dbReference>
<dbReference type="PDB" id="3NT1">
    <property type="method" value="X-ray"/>
    <property type="resolution" value="1.73 A"/>
    <property type="chains" value="A/B=18-604"/>
</dbReference>
<dbReference type="PDB" id="3NTB">
    <property type="method" value="X-ray"/>
    <property type="resolution" value="2.27 A"/>
    <property type="chains" value="A/B/C/D=18-604"/>
</dbReference>
<dbReference type="PDB" id="3NTG">
    <property type="method" value="X-ray"/>
    <property type="resolution" value="2.19 A"/>
    <property type="chains" value="A/B/C/D=18-569"/>
</dbReference>
<dbReference type="PDB" id="3OLT">
    <property type="method" value="X-ray"/>
    <property type="resolution" value="2.45 A"/>
    <property type="chains" value="A/B=20-604"/>
</dbReference>
<dbReference type="PDB" id="3OLU">
    <property type="method" value="X-ray"/>
    <property type="resolution" value="2.35 A"/>
    <property type="chains" value="A/B=20-604"/>
</dbReference>
<dbReference type="PDB" id="3PGH">
    <property type="method" value="X-ray"/>
    <property type="resolution" value="2.50 A"/>
    <property type="chains" value="A/B/C/D=18-604"/>
</dbReference>
<dbReference type="PDB" id="3Q7D">
    <property type="method" value="X-ray"/>
    <property type="resolution" value="2.40 A"/>
    <property type="chains" value="A/B=18-604"/>
</dbReference>
<dbReference type="PDB" id="3QH0">
    <property type="method" value="X-ray"/>
    <property type="resolution" value="2.10 A"/>
    <property type="chains" value="A/B=1-604"/>
</dbReference>
<dbReference type="PDB" id="3QMO">
    <property type="method" value="X-ray"/>
    <property type="resolution" value="3.00 A"/>
    <property type="chains" value="A/B=1-604"/>
</dbReference>
<dbReference type="PDB" id="3RR3">
    <property type="method" value="X-ray"/>
    <property type="resolution" value="2.84 A"/>
    <property type="chains" value="A/B/C/D=18-577"/>
</dbReference>
<dbReference type="PDB" id="3TZI">
    <property type="method" value="X-ray"/>
    <property type="resolution" value="2.15 A"/>
    <property type="chains" value="A/B=20-604"/>
</dbReference>
<dbReference type="PDB" id="4COX">
    <property type="method" value="X-ray"/>
    <property type="resolution" value="2.90 A"/>
    <property type="chains" value="A/B/C/D=18-604"/>
</dbReference>
<dbReference type="PDB" id="4E1G">
    <property type="method" value="X-ray"/>
    <property type="resolution" value="2.10 A"/>
    <property type="chains" value="A/B=1-604"/>
</dbReference>
<dbReference type="PDB" id="4FM5">
    <property type="method" value="X-ray"/>
    <property type="resolution" value="2.81 A"/>
    <property type="chains" value="A/B/C/D=1-604"/>
</dbReference>
<dbReference type="PDB" id="4M10">
    <property type="method" value="X-ray"/>
    <property type="resolution" value="2.01 A"/>
    <property type="chains" value="A/B/C/D=18-604"/>
</dbReference>
<dbReference type="PDB" id="4M11">
    <property type="method" value="X-ray"/>
    <property type="resolution" value="2.45 A"/>
    <property type="chains" value="A/B/C/D=18-569"/>
</dbReference>
<dbReference type="PDB" id="4OTJ">
    <property type="method" value="X-ray"/>
    <property type="resolution" value="2.11 A"/>
    <property type="chains" value="A/B/C/D=18-604"/>
</dbReference>
<dbReference type="PDB" id="4OTY">
    <property type="method" value="X-ray"/>
    <property type="resolution" value="2.35 A"/>
    <property type="chains" value="A/B=18-604"/>
</dbReference>
<dbReference type="PDB" id="4PH9">
    <property type="method" value="X-ray"/>
    <property type="resolution" value="1.81 A"/>
    <property type="chains" value="A/B=20-568"/>
</dbReference>
<dbReference type="PDB" id="4RRW">
    <property type="method" value="X-ray"/>
    <property type="resolution" value="2.57 A"/>
    <property type="chains" value="A/B/C/D=18-604"/>
</dbReference>
<dbReference type="PDB" id="4RRX">
    <property type="method" value="X-ray"/>
    <property type="resolution" value="2.78 A"/>
    <property type="chains" value="A/B=18-604"/>
</dbReference>
<dbReference type="PDB" id="4RRY">
    <property type="method" value="X-ray"/>
    <property type="resolution" value="2.43 A"/>
    <property type="chains" value="A/B/C/D=18-604"/>
</dbReference>
<dbReference type="PDB" id="4RRZ">
    <property type="method" value="X-ray"/>
    <property type="resolution" value="2.57 A"/>
    <property type="chains" value="A/B/C/D=18-604"/>
</dbReference>
<dbReference type="PDB" id="4RS0">
    <property type="method" value="X-ray"/>
    <property type="resolution" value="2.81 A"/>
    <property type="chains" value="A=18-604"/>
</dbReference>
<dbReference type="PDB" id="4RUT">
    <property type="method" value="X-ray"/>
    <property type="resolution" value="2.16 A"/>
    <property type="chains" value="A/B/C/D=18-604"/>
</dbReference>
<dbReference type="PDB" id="4Z0L">
    <property type="method" value="X-ray"/>
    <property type="resolution" value="2.29 A"/>
    <property type="chains" value="A/B/C/D=18-604"/>
</dbReference>
<dbReference type="PDB" id="5COX">
    <property type="method" value="X-ray"/>
    <property type="resolution" value="3.00 A"/>
    <property type="chains" value="A/B/C/D=18-604"/>
</dbReference>
<dbReference type="PDB" id="5FDQ">
    <property type="method" value="X-ray"/>
    <property type="resolution" value="1.90 A"/>
    <property type="chains" value="A/B=20-604"/>
</dbReference>
<dbReference type="PDB" id="5JVY">
    <property type="method" value="X-ray"/>
    <property type="resolution" value="2.36 A"/>
    <property type="chains" value="A/B=20-568"/>
</dbReference>
<dbReference type="PDB" id="5JVZ">
    <property type="method" value="X-ray"/>
    <property type="resolution" value="2.62 A"/>
    <property type="chains" value="A/B=20-569"/>
</dbReference>
<dbReference type="PDB" id="5JW1">
    <property type="method" value="X-ray"/>
    <property type="resolution" value="2.82 A"/>
    <property type="chains" value="A/B=20-569"/>
</dbReference>
<dbReference type="PDB" id="5W58">
    <property type="method" value="X-ray"/>
    <property type="resolution" value="2.27 A"/>
    <property type="chains" value="A=18-604"/>
</dbReference>
<dbReference type="PDB" id="6BL3">
    <property type="method" value="X-ray"/>
    <property type="resolution" value="2.22 A"/>
    <property type="chains" value="A/B/C/D=18-604"/>
</dbReference>
<dbReference type="PDB" id="6BL4">
    <property type="method" value="X-ray"/>
    <property type="resolution" value="2.22 A"/>
    <property type="chains" value="A/B/C/D=18-604"/>
</dbReference>
<dbReference type="PDB" id="6COX">
    <property type="method" value="X-ray"/>
    <property type="resolution" value="2.80 A"/>
    <property type="chains" value="A/B=18-604"/>
</dbReference>
<dbReference type="PDB" id="6OFY">
    <property type="method" value="X-ray"/>
    <property type="resolution" value="2.20 A"/>
    <property type="chains" value="A/B=20-568"/>
</dbReference>
<dbReference type="PDB" id="6V3R">
    <property type="method" value="X-ray"/>
    <property type="resolution" value="2.66 A"/>
    <property type="chains" value="A/B/C/D=18-604"/>
</dbReference>
<dbReference type="PDB" id="8ET0">
    <property type="method" value="X-ray"/>
    <property type="resolution" value="2.15 A"/>
    <property type="chains" value="A/B=18-604"/>
</dbReference>
<dbReference type="PDBsum" id="1CVU"/>
<dbReference type="PDBsum" id="1CX2"/>
<dbReference type="PDBsum" id="1DDX"/>
<dbReference type="PDBsum" id="1PXX"/>
<dbReference type="PDBsum" id="3HS5"/>
<dbReference type="PDBsum" id="3HS6"/>
<dbReference type="PDBsum" id="3HS7"/>
<dbReference type="PDBsum" id="3KRK"/>
<dbReference type="PDBsum" id="3LN0"/>
<dbReference type="PDBsum" id="3LN1"/>
<dbReference type="PDBsum" id="3MDL"/>
<dbReference type="PDBsum" id="3MQE"/>
<dbReference type="PDBsum" id="3NT1"/>
<dbReference type="PDBsum" id="3NTB"/>
<dbReference type="PDBsum" id="3NTG"/>
<dbReference type="PDBsum" id="3OLT"/>
<dbReference type="PDBsum" id="3OLU"/>
<dbReference type="PDBsum" id="3PGH"/>
<dbReference type="PDBsum" id="3Q7D"/>
<dbReference type="PDBsum" id="3QH0"/>
<dbReference type="PDBsum" id="3QMO"/>
<dbReference type="PDBsum" id="3RR3"/>
<dbReference type="PDBsum" id="3TZI"/>
<dbReference type="PDBsum" id="4COX"/>
<dbReference type="PDBsum" id="4E1G"/>
<dbReference type="PDBsum" id="4FM5"/>
<dbReference type="PDBsum" id="4M10"/>
<dbReference type="PDBsum" id="4M11"/>
<dbReference type="PDBsum" id="4OTJ"/>
<dbReference type="PDBsum" id="4OTY"/>
<dbReference type="PDBsum" id="4PH9"/>
<dbReference type="PDBsum" id="4RRW"/>
<dbReference type="PDBsum" id="4RRX"/>
<dbReference type="PDBsum" id="4RRY"/>
<dbReference type="PDBsum" id="4RRZ"/>
<dbReference type="PDBsum" id="4RS0"/>
<dbReference type="PDBsum" id="4RUT"/>
<dbReference type="PDBsum" id="4Z0L"/>
<dbReference type="PDBsum" id="5COX"/>
<dbReference type="PDBsum" id="5FDQ"/>
<dbReference type="PDBsum" id="5JVY"/>
<dbReference type="PDBsum" id="5JVZ"/>
<dbReference type="PDBsum" id="5JW1"/>
<dbReference type="PDBsum" id="5W58"/>
<dbReference type="PDBsum" id="6BL3"/>
<dbReference type="PDBsum" id="6BL4"/>
<dbReference type="PDBsum" id="6COX"/>
<dbReference type="PDBsum" id="6OFY"/>
<dbReference type="PDBsum" id="6V3R"/>
<dbReference type="PDBsum" id="8ET0"/>
<dbReference type="SMR" id="Q05769"/>
<dbReference type="BioGRID" id="202463">
    <property type="interactions" value="10"/>
</dbReference>
<dbReference type="CORUM" id="Q05769"/>
<dbReference type="DIP" id="DIP-31082N"/>
<dbReference type="FunCoup" id="Q05769">
    <property type="interactions" value="617"/>
</dbReference>
<dbReference type="IntAct" id="Q05769">
    <property type="interactions" value="3"/>
</dbReference>
<dbReference type="MINT" id="Q05769"/>
<dbReference type="STRING" id="10090.ENSMUSP00000035065"/>
<dbReference type="BindingDB" id="Q05769"/>
<dbReference type="ChEMBL" id="CHEMBL4321"/>
<dbReference type="DrugCentral" id="Q05769"/>
<dbReference type="GuidetoPHARMACOLOGY" id="1376"/>
<dbReference type="SwissLipids" id="SLP:000001129"/>
<dbReference type="PeroxiBase" id="3360">
    <property type="entry name" value="MmPGHS02"/>
</dbReference>
<dbReference type="GlyConnect" id="514">
    <property type="glycosylation" value="7 N-Linked glycans (5 sites)"/>
</dbReference>
<dbReference type="GlyCosmos" id="Q05769">
    <property type="glycosylation" value="4 sites, 13 glycans"/>
</dbReference>
<dbReference type="GlyGen" id="Q05769">
    <property type="glycosylation" value="4 sites, 13 N-linked glycans (4 sites)"/>
</dbReference>
<dbReference type="iPTMnet" id="Q05769"/>
<dbReference type="PhosphoSitePlus" id="Q05769"/>
<dbReference type="SwissPalm" id="Q05769"/>
<dbReference type="PaxDb" id="10090-ENSMUSP00000035065"/>
<dbReference type="PeptideAtlas" id="Q05769"/>
<dbReference type="ProteomicsDB" id="301805"/>
<dbReference type="Pumba" id="Q05769"/>
<dbReference type="Antibodypedia" id="776">
    <property type="antibodies" value="1074 antibodies from 48 providers"/>
</dbReference>
<dbReference type="DNASU" id="19225"/>
<dbReference type="Ensembl" id="ENSMUST00000035065.9">
    <property type="protein sequence ID" value="ENSMUSP00000035065.8"/>
    <property type="gene ID" value="ENSMUSG00000032487.9"/>
</dbReference>
<dbReference type="GeneID" id="19225"/>
<dbReference type="KEGG" id="mmu:19225"/>
<dbReference type="UCSC" id="uc007cxv.1">
    <property type="organism name" value="mouse"/>
</dbReference>
<dbReference type="AGR" id="MGI:97798"/>
<dbReference type="CTD" id="5743"/>
<dbReference type="MGI" id="MGI:97798">
    <property type="gene designation" value="Ptgs2"/>
</dbReference>
<dbReference type="VEuPathDB" id="HostDB:ENSMUSG00000032487"/>
<dbReference type="eggNOG" id="KOG2408">
    <property type="taxonomic scope" value="Eukaryota"/>
</dbReference>
<dbReference type="GeneTree" id="ENSGT00390000010743"/>
<dbReference type="HOGENOM" id="CLU_022428_0_0_1"/>
<dbReference type="InParanoid" id="Q05769"/>
<dbReference type="OMA" id="MIYPPHI"/>
<dbReference type="OrthoDB" id="823504at2759"/>
<dbReference type="PhylomeDB" id="Q05769"/>
<dbReference type="TreeFam" id="TF329675"/>
<dbReference type="BRENDA" id="1.14.99.1">
    <property type="organism ID" value="3474"/>
</dbReference>
<dbReference type="Reactome" id="R-MMU-197264">
    <property type="pathway name" value="Nicotinamide salvaging"/>
</dbReference>
<dbReference type="Reactome" id="R-MMU-2142770">
    <property type="pathway name" value="Synthesis of 15-eicosatetraenoic acid derivatives"/>
</dbReference>
<dbReference type="Reactome" id="R-MMU-2162123">
    <property type="pathway name" value="Synthesis of Prostaglandins (PG) and Thromboxanes (TX)"/>
</dbReference>
<dbReference type="Reactome" id="R-MMU-9018677">
    <property type="pathway name" value="Biosynthesis of DHA-derived SPMs"/>
</dbReference>
<dbReference type="Reactome" id="R-MMU-9018679">
    <property type="pathway name" value="Biosynthesis of EPA-derived SPMs"/>
</dbReference>
<dbReference type="Reactome" id="R-MMU-9025094">
    <property type="pathway name" value="Biosynthesis of DPAn-3 SPMs"/>
</dbReference>
<dbReference type="Reactome" id="R-MMU-9027604">
    <property type="pathway name" value="Biosynthesis of electrophilic Omega-3 PUFA oxo-derivatives"/>
</dbReference>
<dbReference type="UniPathway" id="UPA00662"/>
<dbReference type="BioGRID-ORCS" id="19225">
    <property type="hits" value="4 hits in 78 CRISPR screens"/>
</dbReference>
<dbReference type="ChiTaRS" id="mt-Co2">
    <property type="organism name" value="mouse"/>
</dbReference>
<dbReference type="EvolutionaryTrace" id="Q05769"/>
<dbReference type="PRO" id="PR:Q05769"/>
<dbReference type="Proteomes" id="UP000000589">
    <property type="component" value="Chromosome 1"/>
</dbReference>
<dbReference type="RNAct" id="Q05769">
    <property type="molecule type" value="protein"/>
</dbReference>
<dbReference type="Bgee" id="ENSMUSG00000032487">
    <property type="expression patterns" value="Expressed in granulocyte and 112 other cell types or tissues"/>
</dbReference>
<dbReference type="ExpressionAtlas" id="Q05769">
    <property type="expression patterns" value="baseline and differential"/>
</dbReference>
<dbReference type="GO" id="GO:0005737">
    <property type="term" value="C:cytoplasm"/>
    <property type="evidence" value="ECO:0000314"/>
    <property type="project" value="MGI"/>
</dbReference>
<dbReference type="GO" id="GO:0005829">
    <property type="term" value="C:cytosol"/>
    <property type="evidence" value="ECO:0007669"/>
    <property type="project" value="Ensembl"/>
</dbReference>
<dbReference type="GO" id="GO:0005789">
    <property type="term" value="C:endoplasmic reticulum membrane"/>
    <property type="evidence" value="ECO:0007669"/>
    <property type="project" value="UniProtKB-SubCell"/>
</dbReference>
<dbReference type="GO" id="GO:0043005">
    <property type="term" value="C:neuron projection"/>
    <property type="evidence" value="ECO:0000314"/>
    <property type="project" value="MGI"/>
</dbReference>
<dbReference type="GO" id="GO:0005637">
    <property type="term" value="C:nuclear inner membrane"/>
    <property type="evidence" value="ECO:0000314"/>
    <property type="project" value="UniProtKB"/>
</dbReference>
<dbReference type="GO" id="GO:0005640">
    <property type="term" value="C:nuclear outer membrane"/>
    <property type="evidence" value="ECO:0000314"/>
    <property type="project" value="UniProtKB"/>
</dbReference>
<dbReference type="GO" id="GO:0051213">
    <property type="term" value="F:dioxygenase activity"/>
    <property type="evidence" value="ECO:0007669"/>
    <property type="project" value="UniProtKB-KW"/>
</dbReference>
<dbReference type="GO" id="GO:0019899">
    <property type="term" value="F:enzyme binding"/>
    <property type="evidence" value="ECO:0007669"/>
    <property type="project" value="Ensembl"/>
</dbReference>
<dbReference type="GO" id="GO:0020037">
    <property type="term" value="F:heme binding"/>
    <property type="evidence" value="ECO:0000314"/>
    <property type="project" value="UniProtKB"/>
</dbReference>
<dbReference type="GO" id="GO:0046872">
    <property type="term" value="F:metal ion binding"/>
    <property type="evidence" value="ECO:0007669"/>
    <property type="project" value="UniProtKB-KW"/>
</dbReference>
<dbReference type="GO" id="GO:0004601">
    <property type="term" value="F:peroxidase activity"/>
    <property type="evidence" value="ECO:0007669"/>
    <property type="project" value="UniProtKB-KW"/>
</dbReference>
<dbReference type="GO" id="GO:0004666">
    <property type="term" value="F:prostaglandin-endoperoxide synthase activity"/>
    <property type="evidence" value="ECO:0000314"/>
    <property type="project" value="UniProtKB"/>
</dbReference>
<dbReference type="GO" id="GO:0042803">
    <property type="term" value="F:protein homodimerization activity"/>
    <property type="evidence" value="ECO:0000353"/>
    <property type="project" value="UniProtKB"/>
</dbReference>
<dbReference type="GO" id="GO:0030282">
    <property type="term" value="P:bone mineralization"/>
    <property type="evidence" value="ECO:0000266"/>
    <property type="project" value="MGI"/>
</dbReference>
<dbReference type="GO" id="GO:0050873">
    <property type="term" value="P:brown fat cell differentiation"/>
    <property type="evidence" value="ECO:0000315"/>
    <property type="project" value="BHF-UCL"/>
</dbReference>
<dbReference type="GO" id="GO:0071498">
    <property type="term" value="P:cellular response to fluid shear stress"/>
    <property type="evidence" value="ECO:0000314"/>
    <property type="project" value="MGI"/>
</dbReference>
<dbReference type="GO" id="GO:0071456">
    <property type="term" value="P:cellular response to hypoxia"/>
    <property type="evidence" value="ECO:0007669"/>
    <property type="project" value="Ensembl"/>
</dbReference>
<dbReference type="GO" id="GO:0071471">
    <property type="term" value="P:cellular response to non-ionic osmotic stress"/>
    <property type="evidence" value="ECO:0000315"/>
    <property type="project" value="CAFA"/>
</dbReference>
<dbReference type="GO" id="GO:0019371">
    <property type="term" value="P:cyclooxygenase pathway"/>
    <property type="evidence" value="ECO:0000314"/>
    <property type="project" value="UniProtKB"/>
</dbReference>
<dbReference type="GO" id="GO:0046697">
    <property type="term" value="P:decidualization"/>
    <property type="evidence" value="ECO:0000315"/>
    <property type="project" value="MGI"/>
</dbReference>
<dbReference type="GO" id="GO:0007566">
    <property type="term" value="P:embryo implantation"/>
    <property type="evidence" value="ECO:0000315"/>
    <property type="project" value="MGI"/>
</dbReference>
<dbReference type="GO" id="GO:0030216">
    <property type="term" value="P:keratinocyte differentiation"/>
    <property type="evidence" value="ECO:0000303"/>
    <property type="project" value="UniProtKB"/>
</dbReference>
<dbReference type="GO" id="GO:0043066">
    <property type="term" value="P:negative regulation of apoptotic process"/>
    <property type="evidence" value="ECO:0000315"/>
    <property type="project" value="CAFA"/>
</dbReference>
<dbReference type="GO" id="GO:1902219">
    <property type="term" value="P:negative regulation of intrinsic apoptotic signaling pathway in response to osmotic stress"/>
    <property type="evidence" value="ECO:0000315"/>
    <property type="project" value="CAFA"/>
</dbReference>
<dbReference type="GO" id="GO:0090336">
    <property type="term" value="P:positive regulation of brown fat cell differentiation"/>
    <property type="evidence" value="ECO:0000315"/>
    <property type="project" value="BHF-UCL"/>
</dbReference>
<dbReference type="GO" id="GO:0031622">
    <property type="term" value="P:positive regulation of fever generation"/>
    <property type="evidence" value="ECO:0000314"/>
    <property type="project" value="BHF-UCL"/>
</dbReference>
<dbReference type="GO" id="GO:0031394">
    <property type="term" value="P:positive regulation of prostaglandin biosynthetic process"/>
    <property type="evidence" value="ECO:0000315"/>
    <property type="project" value="CAFA"/>
</dbReference>
<dbReference type="GO" id="GO:0001516">
    <property type="term" value="P:prostaglandin biosynthetic process"/>
    <property type="evidence" value="ECO:0000314"/>
    <property type="project" value="UniProtKB"/>
</dbReference>
<dbReference type="GO" id="GO:0032310">
    <property type="term" value="P:prostaglandin secretion"/>
    <property type="evidence" value="ECO:0000315"/>
    <property type="project" value="MGI"/>
</dbReference>
<dbReference type="GO" id="GO:0008217">
    <property type="term" value="P:regulation of blood pressure"/>
    <property type="evidence" value="ECO:0000315"/>
    <property type="project" value="MGI"/>
</dbReference>
<dbReference type="GO" id="GO:0042127">
    <property type="term" value="P:regulation of cell population proliferation"/>
    <property type="evidence" value="ECO:0000316"/>
    <property type="project" value="MGI"/>
</dbReference>
<dbReference type="GO" id="GO:0150077">
    <property type="term" value="P:regulation of neuroinflammatory response"/>
    <property type="evidence" value="ECO:0000314"/>
    <property type="project" value="UniProtKB"/>
</dbReference>
<dbReference type="GO" id="GO:0009624">
    <property type="term" value="P:response to nematode"/>
    <property type="evidence" value="ECO:0000314"/>
    <property type="project" value="MGI"/>
</dbReference>
<dbReference type="GO" id="GO:0006979">
    <property type="term" value="P:response to oxidative stress"/>
    <property type="evidence" value="ECO:0007669"/>
    <property type="project" value="InterPro"/>
</dbReference>
<dbReference type="GO" id="GO:0010269">
    <property type="term" value="P:response to selenium ion"/>
    <property type="evidence" value="ECO:0000314"/>
    <property type="project" value="MGI"/>
</dbReference>
<dbReference type="CDD" id="cd00054">
    <property type="entry name" value="EGF_CA"/>
    <property type="match status" value="1"/>
</dbReference>
<dbReference type="CDD" id="cd09816">
    <property type="entry name" value="prostaglandin_endoperoxide_synthase"/>
    <property type="match status" value="1"/>
</dbReference>
<dbReference type="FunFam" id="1.10.640.10:FF:000002">
    <property type="entry name" value="Prostaglandin G/H synthase 2"/>
    <property type="match status" value="1"/>
</dbReference>
<dbReference type="FunFam" id="2.10.25.10:FF:000235">
    <property type="entry name" value="Prostaglandin G/H synthase 2"/>
    <property type="match status" value="1"/>
</dbReference>
<dbReference type="Gene3D" id="1.10.640.10">
    <property type="entry name" value="Haem peroxidase domain superfamily, animal type"/>
    <property type="match status" value="1"/>
</dbReference>
<dbReference type="Gene3D" id="2.10.25.10">
    <property type="entry name" value="Laminin"/>
    <property type="match status" value="1"/>
</dbReference>
<dbReference type="InterPro" id="IPR000742">
    <property type="entry name" value="EGF-like_dom"/>
</dbReference>
<dbReference type="InterPro" id="IPR019791">
    <property type="entry name" value="Haem_peroxidase_animal"/>
</dbReference>
<dbReference type="InterPro" id="IPR010255">
    <property type="entry name" value="Haem_peroxidase_sf"/>
</dbReference>
<dbReference type="InterPro" id="IPR037120">
    <property type="entry name" value="Haem_peroxidase_sf_animal"/>
</dbReference>
<dbReference type="InterPro" id="IPR050783">
    <property type="entry name" value="Oxylipin_biosynth_metab"/>
</dbReference>
<dbReference type="PANTHER" id="PTHR11903">
    <property type="entry name" value="PROSTAGLANDIN G/H SYNTHASE"/>
    <property type="match status" value="1"/>
</dbReference>
<dbReference type="PANTHER" id="PTHR11903:SF8">
    <property type="entry name" value="PROSTAGLANDIN G_H SYNTHASE 2"/>
    <property type="match status" value="1"/>
</dbReference>
<dbReference type="Pfam" id="PF03098">
    <property type="entry name" value="An_peroxidase"/>
    <property type="match status" value="1"/>
</dbReference>
<dbReference type="Pfam" id="PF00008">
    <property type="entry name" value="EGF"/>
    <property type="match status" value="1"/>
</dbReference>
<dbReference type="PRINTS" id="PR00457">
    <property type="entry name" value="ANPEROXIDASE"/>
</dbReference>
<dbReference type="SUPFAM" id="SSF57196">
    <property type="entry name" value="EGF/Laminin"/>
    <property type="match status" value="1"/>
</dbReference>
<dbReference type="SUPFAM" id="SSF48113">
    <property type="entry name" value="Heme-dependent peroxidases"/>
    <property type="match status" value="1"/>
</dbReference>
<dbReference type="PROSITE" id="PS50026">
    <property type="entry name" value="EGF_3"/>
    <property type="match status" value="1"/>
</dbReference>
<dbReference type="PROSITE" id="PS50292">
    <property type="entry name" value="PEROXIDASE_3"/>
    <property type="match status" value="1"/>
</dbReference>
<protein>
    <recommendedName>
        <fullName evidence="19">Prostaglandin G/H synthase 2</fullName>
        <ecNumber evidence="7 9 10 12 14">1.14.99.1</ecNumber>
    </recommendedName>
    <alternativeName>
        <fullName>Cyclooxygenase-2</fullName>
        <shortName>COX-2</shortName>
    </alternativeName>
    <alternativeName>
        <fullName>Glucocorticoid-regulated inflammatory cyclooxygenase</fullName>
    </alternativeName>
    <alternativeName>
        <fullName>Gripghs</fullName>
    </alternativeName>
    <alternativeName>
        <fullName>Macrophage activation-associated marker protein P71/73</fullName>
    </alternativeName>
    <alternativeName>
        <fullName>PES-2</fullName>
    </alternativeName>
    <alternativeName>
        <fullName>PHS II</fullName>
    </alternativeName>
    <alternativeName>
        <fullName>Prostaglandin H2 synthase 2</fullName>
        <shortName>PGH synthase 2</shortName>
        <shortName>PGHS-2</shortName>
    </alternativeName>
    <alternativeName>
        <fullName>Prostaglandin-endoperoxide synthase 2</fullName>
    </alternativeName>
    <alternativeName>
        <fullName>TIS10 protein</fullName>
    </alternativeName>
</protein>
<accession>Q05769</accession>
<accession>Q543K3</accession>
<gene>
    <name evidence="27" type="primary">Ptgs2</name>
    <name type="synonym">Cox-2</name>
    <name type="synonym">Cox2</name>
    <name type="synonym">Pghs-b</name>
    <name type="synonym">Tis10</name>
</gene>
<proteinExistence type="evidence at protein level"/>
<name>PGH2_MOUSE</name>